<organism>
    <name type="scientific">Mus musculus</name>
    <name type="common">Mouse</name>
    <dbReference type="NCBI Taxonomy" id="10090"/>
    <lineage>
        <taxon>Eukaryota</taxon>
        <taxon>Metazoa</taxon>
        <taxon>Chordata</taxon>
        <taxon>Craniata</taxon>
        <taxon>Vertebrata</taxon>
        <taxon>Euteleostomi</taxon>
        <taxon>Mammalia</taxon>
        <taxon>Eutheria</taxon>
        <taxon>Euarchontoglires</taxon>
        <taxon>Glires</taxon>
        <taxon>Rodentia</taxon>
        <taxon>Myomorpha</taxon>
        <taxon>Muroidea</taxon>
        <taxon>Muridae</taxon>
        <taxon>Murinae</taxon>
        <taxon>Mus</taxon>
        <taxon>Mus</taxon>
    </lineage>
</organism>
<name>FMR1_MOUSE</name>
<accession>P35922</accession>
<dbReference type="EMBL" id="L23971">
    <property type="protein sequence ID" value="AAA37635.1"/>
    <property type="molecule type" value="mRNA"/>
</dbReference>
<dbReference type="CCDS" id="CCDS30171.1">
    <molecule id="P35922-1"/>
</dbReference>
<dbReference type="CCDS" id="CCDS72385.1">
    <molecule id="P35922-3"/>
</dbReference>
<dbReference type="CCDS" id="CCDS90720.1">
    <molecule id="P35922-7"/>
</dbReference>
<dbReference type="PIR" id="S36173">
    <property type="entry name" value="S36173"/>
</dbReference>
<dbReference type="SMR" id="P35922"/>
<dbReference type="CORUM" id="P35922"/>
<dbReference type="FunCoup" id="P35922">
    <property type="interactions" value="1953"/>
</dbReference>
<dbReference type="IntAct" id="P35922">
    <property type="interactions" value="242"/>
</dbReference>
<dbReference type="MINT" id="P35922"/>
<dbReference type="STRING" id="10090.ENSMUSP00000085906"/>
<dbReference type="GlyGen" id="P35922">
    <property type="glycosylation" value="3 sites, 1 N-linked glycan (1 site), 1 O-linked glycan (2 sites)"/>
</dbReference>
<dbReference type="iPTMnet" id="P35922"/>
<dbReference type="PhosphoSitePlus" id="P35922"/>
<dbReference type="SwissPalm" id="P35922"/>
<dbReference type="jPOST" id="P35922"/>
<dbReference type="PaxDb" id="10090-ENSMUSP00000085906"/>
<dbReference type="PeptideAtlas" id="P35922"/>
<dbReference type="ProteomicsDB" id="267374">
    <molecule id="P35922-1"/>
</dbReference>
<dbReference type="ProteomicsDB" id="267375">
    <molecule id="P35922-2"/>
</dbReference>
<dbReference type="ProteomicsDB" id="267376">
    <molecule id="P35922-3"/>
</dbReference>
<dbReference type="ProteomicsDB" id="267377">
    <molecule id="P35922-4"/>
</dbReference>
<dbReference type="ProteomicsDB" id="267378">
    <molecule id="P35922-5"/>
</dbReference>
<dbReference type="ProteomicsDB" id="267379">
    <molecule id="P35922-6"/>
</dbReference>
<dbReference type="ProteomicsDB" id="267380">
    <molecule id="P35922-7"/>
</dbReference>
<dbReference type="ProteomicsDB" id="267381">
    <molecule id="P35922-8"/>
</dbReference>
<dbReference type="ProteomicsDB" id="267382">
    <molecule id="P35922-9"/>
</dbReference>
<dbReference type="ProteomicsDB" id="267383">
    <molecule id="P35922-10"/>
</dbReference>
<dbReference type="ProteomicsDB" id="267384">
    <molecule id="P35922-11"/>
</dbReference>
<dbReference type="ProteomicsDB" id="267385">
    <molecule id="P35922-12"/>
</dbReference>
<dbReference type="Pumba" id="P35922"/>
<dbReference type="UCSC" id="uc009tiu.2">
    <molecule id="P35922-1"/>
    <property type="organism name" value="mouse"/>
</dbReference>
<dbReference type="UCSC" id="uc009tiv.2">
    <molecule id="P35922-11"/>
    <property type="organism name" value="mouse"/>
</dbReference>
<dbReference type="UCSC" id="uc009tiy.1">
    <molecule id="P35922-5"/>
    <property type="organism name" value="mouse"/>
</dbReference>
<dbReference type="AGR" id="MGI:95564"/>
<dbReference type="MGI" id="MGI:95564">
    <property type="gene designation" value="Fmr1"/>
</dbReference>
<dbReference type="eggNOG" id="ENOG502QPKJ">
    <property type="taxonomic scope" value="Eukaryota"/>
</dbReference>
<dbReference type="InParanoid" id="P35922"/>
<dbReference type="PhylomeDB" id="P35922"/>
<dbReference type="CD-CODE" id="764D0258">
    <property type="entry name" value="Neuronal RNP granule"/>
</dbReference>
<dbReference type="CD-CODE" id="8BEB9125">
    <property type="entry name" value="Cajal body"/>
</dbReference>
<dbReference type="CD-CODE" id="CE726F99">
    <property type="entry name" value="Postsynaptic density"/>
</dbReference>
<dbReference type="CD-CODE" id="D12E4DB9">
    <property type="entry name" value="Stress granule"/>
</dbReference>
<dbReference type="ChiTaRS" id="Fmr1">
    <property type="organism name" value="mouse"/>
</dbReference>
<dbReference type="PRO" id="PR:P35922"/>
<dbReference type="Proteomes" id="UP000000589">
    <property type="component" value="Unplaced"/>
</dbReference>
<dbReference type="RNAct" id="P35922">
    <property type="molecule type" value="protein"/>
</dbReference>
<dbReference type="GO" id="GO:0030424">
    <property type="term" value="C:axon"/>
    <property type="evidence" value="ECO:0000314"/>
    <property type="project" value="UniProtKB"/>
</dbReference>
<dbReference type="GO" id="GO:0043679">
    <property type="term" value="C:axon terminus"/>
    <property type="evidence" value="ECO:0000250"/>
    <property type="project" value="UniProtKB"/>
</dbReference>
<dbReference type="GO" id="GO:0044297">
    <property type="term" value="C:cell body"/>
    <property type="evidence" value="ECO:0000266"/>
    <property type="project" value="MGI"/>
</dbReference>
<dbReference type="GO" id="GO:0010369">
    <property type="term" value="C:chromocenter"/>
    <property type="evidence" value="ECO:0000314"/>
    <property type="project" value="UniProtKB"/>
</dbReference>
<dbReference type="GO" id="GO:0005694">
    <property type="term" value="C:chromosome"/>
    <property type="evidence" value="ECO:0000314"/>
    <property type="project" value="UniProtKB"/>
</dbReference>
<dbReference type="GO" id="GO:0000775">
    <property type="term" value="C:chromosome, centromeric region"/>
    <property type="evidence" value="ECO:0007669"/>
    <property type="project" value="UniProtKB-SubCell"/>
</dbReference>
<dbReference type="GO" id="GO:0005737">
    <property type="term" value="C:cytoplasm"/>
    <property type="evidence" value="ECO:0000314"/>
    <property type="project" value="UniProtKB"/>
</dbReference>
<dbReference type="GO" id="GO:0036464">
    <property type="term" value="C:cytoplasmic ribonucleoprotein granule"/>
    <property type="evidence" value="ECO:0000314"/>
    <property type="project" value="UniProtKB"/>
</dbReference>
<dbReference type="GO" id="GO:0010494">
    <property type="term" value="C:cytoplasmic stress granule"/>
    <property type="evidence" value="ECO:0000314"/>
    <property type="project" value="MGI"/>
</dbReference>
<dbReference type="GO" id="GO:0030425">
    <property type="term" value="C:dendrite"/>
    <property type="evidence" value="ECO:0000314"/>
    <property type="project" value="UniProtKB"/>
</dbReference>
<dbReference type="GO" id="GO:1902737">
    <property type="term" value="C:dendritic filopodium"/>
    <property type="evidence" value="ECO:0000314"/>
    <property type="project" value="UniProtKB"/>
</dbReference>
<dbReference type="GO" id="GO:0043197">
    <property type="term" value="C:dendritic spine"/>
    <property type="evidence" value="ECO:0000314"/>
    <property type="project" value="UniProtKB"/>
</dbReference>
<dbReference type="GO" id="GO:0032433">
    <property type="term" value="C:filopodium tip"/>
    <property type="evidence" value="ECO:0000314"/>
    <property type="project" value="UniProtKB"/>
</dbReference>
<dbReference type="GO" id="GO:0097386">
    <property type="term" value="C:glial cell projection"/>
    <property type="evidence" value="ECO:0000250"/>
    <property type="project" value="UniProtKB"/>
</dbReference>
<dbReference type="GO" id="GO:0098978">
    <property type="term" value="C:glutamatergic synapse"/>
    <property type="evidence" value="ECO:0000314"/>
    <property type="project" value="SynGO"/>
</dbReference>
<dbReference type="GO" id="GO:0030426">
    <property type="term" value="C:growth cone"/>
    <property type="evidence" value="ECO:0000250"/>
    <property type="project" value="UniProtKB"/>
</dbReference>
<dbReference type="GO" id="GO:1990812">
    <property type="term" value="C:growth cone filopodium"/>
    <property type="evidence" value="ECO:0000314"/>
    <property type="project" value="UniProtKB"/>
</dbReference>
<dbReference type="GO" id="GO:0098686">
    <property type="term" value="C:hippocampal mossy fiber to CA3 synapse"/>
    <property type="evidence" value="ECO:0000314"/>
    <property type="project" value="SynGO"/>
</dbReference>
<dbReference type="GO" id="GO:0015630">
    <property type="term" value="C:microtubule cytoskeleton"/>
    <property type="evidence" value="ECO:0000266"/>
    <property type="project" value="MGI"/>
</dbReference>
<dbReference type="GO" id="GO:0071598">
    <property type="term" value="C:neuronal ribonucleoprotein granule"/>
    <property type="evidence" value="ECO:0000314"/>
    <property type="project" value="UniProtKB"/>
</dbReference>
<dbReference type="GO" id="GO:0005730">
    <property type="term" value="C:nucleolus"/>
    <property type="evidence" value="ECO:0000250"/>
    <property type="project" value="UniProtKB"/>
</dbReference>
<dbReference type="GO" id="GO:0005654">
    <property type="term" value="C:nucleoplasm"/>
    <property type="evidence" value="ECO:0000250"/>
    <property type="project" value="UniProtKB"/>
</dbReference>
<dbReference type="GO" id="GO:0005634">
    <property type="term" value="C:nucleus"/>
    <property type="evidence" value="ECO:0000314"/>
    <property type="project" value="MGI"/>
</dbReference>
<dbReference type="GO" id="GO:0043204">
    <property type="term" value="C:perikaryon"/>
    <property type="evidence" value="ECO:0000314"/>
    <property type="project" value="UniProtKB"/>
</dbReference>
<dbReference type="GO" id="GO:0048471">
    <property type="term" value="C:perinuclear region of cytoplasm"/>
    <property type="evidence" value="ECO:0000314"/>
    <property type="project" value="UniProtKB"/>
</dbReference>
<dbReference type="GO" id="GO:0098794">
    <property type="term" value="C:postsynapse"/>
    <property type="evidence" value="ECO:0000314"/>
    <property type="project" value="UniProtKB"/>
</dbReference>
<dbReference type="GO" id="GO:0014069">
    <property type="term" value="C:postsynaptic density"/>
    <property type="evidence" value="ECO:0000250"/>
    <property type="project" value="UniProtKB"/>
</dbReference>
<dbReference type="GO" id="GO:0045211">
    <property type="term" value="C:postsynaptic membrane"/>
    <property type="evidence" value="ECO:0007669"/>
    <property type="project" value="UniProtKB-SubCell"/>
</dbReference>
<dbReference type="GO" id="GO:0098793">
    <property type="term" value="C:presynapse"/>
    <property type="evidence" value="ECO:0000314"/>
    <property type="project" value="UniProtKB"/>
</dbReference>
<dbReference type="GO" id="GO:0099523">
    <property type="term" value="C:presynaptic cytosol"/>
    <property type="evidence" value="ECO:0000314"/>
    <property type="project" value="SynGO"/>
</dbReference>
<dbReference type="GO" id="GO:0042734">
    <property type="term" value="C:presynaptic membrane"/>
    <property type="evidence" value="ECO:0007669"/>
    <property type="project" value="UniProtKB-SubCell"/>
</dbReference>
<dbReference type="GO" id="GO:1990904">
    <property type="term" value="C:ribonucleoprotein complex"/>
    <property type="evidence" value="ECO:0007669"/>
    <property type="project" value="UniProtKB-KW"/>
</dbReference>
<dbReference type="GO" id="GO:0098685">
    <property type="term" value="C:Schaffer collateral - CA1 synapse"/>
    <property type="evidence" value="ECO:0000314"/>
    <property type="project" value="SynGO"/>
</dbReference>
<dbReference type="GO" id="GO:0045202">
    <property type="term" value="C:synapse"/>
    <property type="evidence" value="ECO:0000314"/>
    <property type="project" value="UniProtKB"/>
</dbReference>
<dbReference type="GO" id="GO:0003682">
    <property type="term" value="F:chromatin binding"/>
    <property type="evidence" value="ECO:0000314"/>
    <property type="project" value="UniProtKB"/>
</dbReference>
<dbReference type="GO" id="GO:0070840">
    <property type="term" value="F:dynein complex binding"/>
    <property type="evidence" value="ECO:0000314"/>
    <property type="project" value="UniProtKB"/>
</dbReference>
<dbReference type="GO" id="GO:0002151">
    <property type="term" value="F:G-quadruplex RNA binding"/>
    <property type="evidence" value="ECO:0000250"/>
    <property type="project" value="UniProtKB"/>
</dbReference>
<dbReference type="GO" id="GO:0140006">
    <property type="term" value="F:histone H3 reader activity"/>
    <property type="evidence" value="ECO:0000250"/>
    <property type="project" value="UniProtKB"/>
</dbReference>
<dbReference type="GO" id="GO:0008017">
    <property type="term" value="F:microtubule binding"/>
    <property type="evidence" value="ECO:0000314"/>
    <property type="project" value="UniProtKB"/>
</dbReference>
<dbReference type="GO" id="GO:0035198">
    <property type="term" value="F:miRNA binding"/>
    <property type="evidence" value="ECO:0000314"/>
    <property type="project" value="UniProtKB"/>
</dbReference>
<dbReference type="GO" id="GO:0140693">
    <property type="term" value="F:molecular condensate scaffold activity"/>
    <property type="evidence" value="ECO:0000250"/>
    <property type="project" value="UniProtKB"/>
</dbReference>
<dbReference type="GO" id="GO:0003730">
    <property type="term" value="F:mRNA 3'-UTR binding"/>
    <property type="evidence" value="ECO:0000314"/>
    <property type="project" value="UniProtKB"/>
</dbReference>
<dbReference type="GO" id="GO:0048027">
    <property type="term" value="F:mRNA 5'-UTR binding"/>
    <property type="evidence" value="ECO:0000250"/>
    <property type="project" value="UniProtKB"/>
</dbReference>
<dbReference type="GO" id="GO:0003729">
    <property type="term" value="F:mRNA binding"/>
    <property type="evidence" value="ECO:0000314"/>
    <property type="project" value="UniProtKB"/>
</dbReference>
<dbReference type="GO" id="GO:1990247">
    <property type="term" value="F:N6-methyladenosine-containing RNA reader activity"/>
    <property type="evidence" value="ECO:0000314"/>
    <property type="project" value="UniProtKB"/>
</dbReference>
<dbReference type="GO" id="GO:0034046">
    <property type="term" value="F:poly(G) binding"/>
    <property type="evidence" value="ECO:0000250"/>
    <property type="project" value="UniProtKB"/>
</dbReference>
<dbReference type="GO" id="GO:0008266">
    <property type="term" value="F:poly(U) RNA binding"/>
    <property type="evidence" value="ECO:0000250"/>
    <property type="project" value="UniProtKB"/>
</dbReference>
<dbReference type="GO" id="GO:0046982">
    <property type="term" value="F:protein heterodimerization activity"/>
    <property type="evidence" value="ECO:0000250"/>
    <property type="project" value="UniProtKB"/>
</dbReference>
<dbReference type="GO" id="GO:0042803">
    <property type="term" value="F:protein homodimerization activity"/>
    <property type="evidence" value="ECO:0000250"/>
    <property type="project" value="UniProtKB"/>
</dbReference>
<dbReference type="GO" id="GO:0003723">
    <property type="term" value="F:RNA binding"/>
    <property type="evidence" value="ECO:0000314"/>
    <property type="project" value="MGI"/>
</dbReference>
<dbReference type="GO" id="GO:0035613">
    <property type="term" value="F:RNA stem-loop binding"/>
    <property type="evidence" value="ECO:0000250"/>
    <property type="project" value="UniProtKB"/>
</dbReference>
<dbReference type="GO" id="GO:0033592">
    <property type="term" value="F:RNA strand annealing activity"/>
    <property type="evidence" value="ECO:0000250"/>
    <property type="project" value="UniProtKB"/>
</dbReference>
<dbReference type="GO" id="GO:1990825">
    <property type="term" value="F:sequence-specific mRNA binding"/>
    <property type="evidence" value="ECO:0000250"/>
    <property type="project" value="UniProtKB"/>
</dbReference>
<dbReference type="GO" id="GO:0035197">
    <property type="term" value="F:siRNA binding"/>
    <property type="evidence" value="ECO:0000250"/>
    <property type="project" value="UniProtKB"/>
</dbReference>
<dbReference type="GO" id="GO:0030371">
    <property type="term" value="F:translation repressor activity"/>
    <property type="evidence" value="ECO:0000314"/>
    <property type="project" value="UniProtKB"/>
</dbReference>
<dbReference type="GO" id="GO:0007417">
    <property type="term" value="P:central nervous system development"/>
    <property type="evidence" value="ECO:0000315"/>
    <property type="project" value="MGI"/>
</dbReference>
<dbReference type="GO" id="GO:0060996">
    <property type="term" value="P:dendritic spine development"/>
    <property type="evidence" value="ECO:0000316"/>
    <property type="project" value="MGI"/>
</dbReference>
<dbReference type="GO" id="GO:0006281">
    <property type="term" value="P:DNA repair"/>
    <property type="evidence" value="ECO:0000314"/>
    <property type="project" value="UniProtKB"/>
</dbReference>
<dbReference type="GO" id="GO:0098976">
    <property type="term" value="P:excitatory chemical synaptic transmission"/>
    <property type="evidence" value="ECO:0000315"/>
    <property type="project" value="MGI"/>
</dbReference>
<dbReference type="GO" id="GO:0007215">
    <property type="term" value="P:glutamate receptor signaling pathway"/>
    <property type="evidence" value="ECO:0000314"/>
    <property type="project" value="UniProtKB"/>
</dbReference>
<dbReference type="GO" id="GO:0098977">
    <property type="term" value="P:inhibitory chemical synaptic transmission"/>
    <property type="evidence" value="ECO:0000315"/>
    <property type="project" value="MGI"/>
</dbReference>
<dbReference type="GO" id="GO:0140694">
    <property type="term" value="P:membraneless organelle assembly"/>
    <property type="evidence" value="ECO:0000250"/>
    <property type="project" value="UniProtKB"/>
</dbReference>
<dbReference type="GO" id="GO:0035195">
    <property type="term" value="P:miRNA-mediated post-transcriptional gene silencing"/>
    <property type="evidence" value="ECO:0000314"/>
    <property type="project" value="UniProtKB"/>
</dbReference>
<dbReference type="GO" id="GO:0006406">
    <property type="term" value="P:mRNA export from nucleus"/>
    <property type="evidence" value="ECO:0000314"/>
    <property type="project" value="UniProtKB"/>
</dbReference>
<dbReference type="GO" id="GO:0006397">
    <property type="term" value="P:mRNA processing"/>
    <property type="evidence" value="ECO:0007669"/>
    <property type="project" value="UniProtKB-KW"/>
</dbReference>
<dbReference type="GO" id="GO:0051028">
    <property type="term" value="P:mRNA transport"/>
    <property type="evidence" value="ECO:0000314"/>
    <property type="project" value="UniProtKB"/>
</dbReference>
<dbReference type="GO" id="GO:2000766">
    <property type="term" value="P:negative regulation of cytoplasmic translation"/>
    <property type="evidence" value="ECO:0000314"/>
    <property type="project" value="UniProtKB"/>
</dbReference>
<dbReference type="GO" id="GO:0010629">
    <property type="term" value="P:negative regulation of gene expression"/>
    <property type="evidence" value="ECO:0000315"/>
    <property type="project" value="UniProtKB"/>
</dbReference>
<dbReference type="GO" id="GO:1900453">
    <property type="term" value="P:negative regulation of long-term synaptic depression"/>
    <property type="evidence" value="ECO:0000315"/>
    <property type="project" value="UniProtKB"/>
</dbReference>
<dbReference type="GO" id="GO:2000301">
    <property type="term" value="P:negative regulation of synaptic vesicle exocytosis"/>
    <property type="evidence" value="ECO:0000250"/>
    <property type="project" value="UniProtKB"/>
</dbReference>
<dbReference type="GO" id="GO:0017148">
    <property type="term" value="P:negative regulation of translation"/>
    <property type="evidence" value="ECO:0000314"/>
    <property type="project" value="UniProtKB"/>
</dbReference>
<dbReference type="GO" id="GO:0045947">
    <property type="term" value="P:negative regulation of translational initiation"/>
    <property type="evidence" value="ECO:0000314"/>
    <property type="project" value="UniProtKB"/>
</dbReference>
<dbReference type="GO" id="GO:1901386">
    <property type="term" value="P:negative regulation of voltage-gated calcium channel activity"/>
    <property type="evidence" value="ECO:0000250"/>
    <property type="project" value="UniProtKB"/>
</dbReference>
<dbReference type="GO" id="GO:0060999">
    <property type="term" value="P:positive regulation of dendritic spine development"/>
    <property type="evidence" value="ECO:0000314"/>
    <property type="project" value="UniProtKB"/>
</dbReference>
<dbReference type="GO" id="GO:0051491">
    <property type="term" value="P:positive regulation of filopodium assembly"/>
    <property type="evidence" value="ECO:0000314"/>
    <property type="project" value="UniProtKB"/>
</dbReference>
<dbReference type="GO" id="GO:2000637">
    <property type="term" value="P:positive regulation of miRNA-mediated gene silencing"/>
    <property type="evidence" value="ECO:0000250"/>
    <property type="project" value="UniProtKB"/>
</dbReference>
<dbReference type="GO" id="GO:1901800">
    <property type="term" value="P:positive regulation of proteasomal protein catabolic process"/>
    <property type="evidence" value="ECO:0000314"/>
    <property type="project" value="UniProtKB"/>
</dbReference>
<dbReference type="GO" id="GO:0002092">
    <property type="term" value="P:positive regulation of receptor internalization"/>
    <property type="evidence" value="ECO:0000250"/>
    <property type="project" value="UniProtKB"/>
</dbReference>
<dbReference type="GO" id="GO:0045727">
    <property type="term" value="P:positive regulation of translation"/>
    <property type="evidence" value="ECO:0000315"/>
    <property type="project" value="CACAO"/>
</dbReference>
<dbReference type="GO" id="GO:0000381">
    <property type="term" value="P:regulation of alternative mRNA splicing, via spliceosome"/>
    <property type="evidence" value="ECO:0000314"/>
    <property type="project" value="UniProtKB"/>
</dbReference>
<dbReference type="GO" id="GO:0060998">
    <property type="term" value="P:regulation of dendritic spine development"/>
    <property type="evidence" value="ECO:0000315"/>
    <property type="project" value="UniProtKB"/>
</dbReference>
<dbReference type="GO" id="GO:0051489">
    <property type="term" value="P:regulation of filopodium assembly"/>
    <property type="evidence" value="ECO:0000315"/>
    <property type="project" value="UniProtKB"/>
</dbReference>
<dbReference type="GO" id="GO:0043488">
    <property type="term" value="P:regulation of mRNA stability"/>
    <property type="evidence" value="ECO:0000315"/>
    <property type="project" value="UniProtKB"/>
</dbReference>
<dbReference type="GO" id="GO:0098908">
    <property type="term" value="P:regulation of neuronal action potential"/>
    <property type="evidence" value="ECO:0000250"/>
    <property type="project" value="UniProtKB"/>
</dbReference>
<dbReference type="GO" id="GO:0046928">
    <property type="term" value="P:regulation of neurotransmitter secretion"/>
    <property type="evidence" value="ECO:0000250"/>
    <property type="project" value="UniProtKB"/>
</dbReference>
<dbReference type="GO" id="GO:0099578">
    <property type="term" value="P:regulation of translation at postsynapse, modulating synaptic transmission"/>
    <property type="evidence" value="ECO:0000314"/>
    <property type="project" value="SynGO"/>
</dbReference>
<dbReference type="GO" id="GO:0097396">
    <property type="term" value="P:response to interleukin-17"/>
    <property type="evidence" value="ECO:0000315"/>
    <property type="project" value="MGI"/>
</dbReference>
<dbReference type="GO" id="GO:0008380">
    <property type="term" value="P:RNA splicing"/>
    <property type="evidence" value="ECO:0007669"/>
    <property type="project" value="UniProtKB-KW"/>
</dbReference>
<dbReference type="GO" id="GO:0035176">
    <property type="term" value="P:social behavior"/>
    <property type="evidence" value="ECO:0000315"/>
    <property type="project" value="MGI"/>
</dbReference>
<dbReference type="GO" id="GO:0034063">
    <property type="term" value="P:stress granule assembly"/>
    <property type="evidence" value="ECO:0000250"/>
    <property type="project" value="UniProtKB"/>
</dbReference>
<dbReference type="GO" id="GO:0019226">
    <property type="term" value="P:transmission of nerve impulse"/>
    <property type="evidence" value="ECO:0000315"/>
    <property type="project" value="MGI"/>
</dbReference>
<dbReference type="CDD" id="cd22506">
    <property type="entry name" value="KH_I_FMR1_rpt1"/>
    <property type="match status" value="1"/>
</dbReference>
<dbReference type="CDD" id="cd22509">
    <property type="entry name" value="KH_I_FMR1_rpt2"/>
    <property type="match status" value="1"/>
</dbReference>
<dbReference type="CDD" id="cd20471">
    <property type="entry name" value="Tudor_Agenet_FMR1_rpt1"/>
    <property type="match status" value="1"/>
</dbReference>
<dbReference type="CDD" id="cd20474">
    <property type="entry name" value="Tudor_Agenet_FMR1_rpt2"/>
    <property type="match status" value="1"/>
</dbReference>
<dbReference type="FunFam" id="2.30.30.140:FF:000001">
    <property type="entry name" value="Fragile X mental retardation 1, isoform CRA_e"/>
    <property type="match status" value="1"/>
</dbReference>
<dbReference type="FunFam" id="2.30.30.140:FF:000002">
    <property type="entry name" value="Fragile X mental retardation 1, isoform CRA_e"/>
    <property type="match status" value="1"/>
</dbReference>
<dbReference type="FunFam" id="3.30.1370.10:FF:000004">
    <property type="entry name" value="Fragile X mental retardation 1, isoform CRA_e"/>
    <property type="match status" value="1"/>
</dbReference>
<dbReference type="FunFam" id="3.30.1370.10:FF:000032">
    <property type="entry name" value="synaptic functional regulator FMR1 isoform X2"/>
    <property type="match status" value="1"/>
</dbReference>
<dbReference type="FunFam" id="3.30.1370.10:FF:000034">
    <property type="entry name" value="synaptic functional regulator FMR1 isoform X2"/>
    <property type="match status" value="1"/>
</dbReference>
<dbReference type="Gene3D" id="2.30.30.140">
    <property type="match status" value="2"/>
</dbReference>
<dbReference type="Gene3D" id="3.30.1370.10">
    <property type="entry name" value="K Homology domain, type 1"/>
    <property type="match status" value="3"/>
</dbReference>
<dbReference type="InterPro" id="IPR008395">
    <property type="entry name" value="Agenet-like_dom"/>
</dbReference>
<dbReference type="InterPro" id="IPR040148">
    <property type="entry name" value="FMR1"/>
</dbReference>
<dbReference type="InterPro" id="IPR022034">
    <property type="entry name" value="FMR1-like_C_core"/>
</dbReference>
<dbReference type="InterPro" id="IPR032196">
    <property type="entry name" value="FMR1_C2"/>
</dbReference>
<dbReference type="InterPro" id="IPR040472">
    <property type="entry name" value="FMRP_KH0"/>
</dbReference>
<dbReference type="InterPro" id="IPR004087">
    <property type="entry name" value="KH_dom"/>
</dbReference>
<dbReference type="InterPro" id="IPR004088">
    <property type="entry name" value="KH_dom_type_1"/>
</dbReference>
<dbReference type="InterPro" id="IPR036612">
    <property type="entry name" value="KH_dom_type_1_sf"/>
</dbReference>
<dbReference type="InterPro" id="IPR047438">
    <property type="entry name" value="KH_I_FMR1_rpt1"/>
</dbReference>
<dbReference type="InterPro" id="IPR047440">
    <property type="entry name" value="KH_I_FMR1_rpt2"/>
</dbReference>
<dbReference type="InterPro" id="IPR047431">
    <property type="entry name" value="Tudor_Agenet_FMR1_rpt1"/>
</dbReference>
<dbReference type="InterPro" id="IPR047436">
    <property type="entry name" value="Tudor_Agenet_FMR1_rpt2"/>
</dbReference>
<dbReference type="InterPro" id="IPR041560">
    <property type="entry name" value="Tudor_FRM1"/>
</dbReference>
<dbReference type="PANTHER" id="PTHR10603">
    <property type="entry name" value="FRAGILE X MENTAL RETARDATION SYNDROME-RELATED PROTEIN"/>
    <property type="match status" value="1"/>
</dbReference>
<dbReference type="PANTHER" id="PTHR10603:SF4">
    <property type="entry name" value="FRAGILE X MESSENGER RIBONUCLEOPROTEIN 1"/>
    <property type="match status" value="1"/>
</dbReference>
<dbReference type="Pfam" id="PF05641">
    <property type="entry name" value="Agenet"/>
    <property type="match status" value="1"/>
</dbReference>
<dbReference type="Pfam" id="PF16098">
    <property type="entry name" value="FXMR_C2"/>
    <property type="match status" value="2"/>
</dbReference>
<dbReference type="Pfam" id="PF12235">
    <property type="entry name" value="FXMRP1_C_core"/>
    <property type="match status" value="1"/>
</dbReference>
<dbReference type="Pfam" id="PF00013">
    <property type="entry name" value="KH_1"/>
    <property type="match status" value="2"/>
</dbReference>
<dbReference type="Pfam" id="PF17904">
    <property type="entry name" value="KH_9"/>
    <property type="match status" value="1"/>
</dbReference>
<dbReference type="Pfam" id="PF18336">
    <property type="entry name" value="Tudor_FRX1"/>
    <property type="match status" value="1"/>
</dbReference>
<dbReference type="SMART" id="SM00322">
    <property type="entry name" value="KH"/>
    <property type="match status" value="2"/>
</dbReference>
<dbReference type="SUPFAM" id="SSF54791">
    <property type="entry name" value="Eukaryotic type KH-domain (KH-domain type I)"/>
    <property type="match status" value="2"/>
</dbReference>
<dbReference type="PROSITE" id="PS51641">
    <property type="entry name" value="AGENET_LIKE"/>
    <property type="match status" value="2"/>
</dbReference>
<dbReference type="PROSITE" id="PS50084">
    <property type="entry name" value="KH_TYPE_1"/>
    <property type="match status" value="2"/>
</dbReference>
<proteinExistence type="evidence at protein level"/>
<gene>
    <name evidence="69 72" type="primary">Fmr1</name>
    <name evidence="70" type="synonym">Fmr-1</name>
</gene>
<sequence>MEELVVEVRGSNGAFYKAFVKDVHEDSITVAFENNWQPERQIPFHDVRFPPPVGYNKDINESDEVEVYSRANEKEPCCWWLAKVRMIKGEFYVIEYAACDATYNEIVTIERLRSVNPNKPATKDTFHKIKLEVPEDLRQMCAKESAHKDFKKAVGAFSVTYDPENYQLVILSINEVTSKRAHMLIDMHFRSLRTKLSLILRNEEASKQLESSRQLASRFHEQFIVREDLMGLAIGTHGANIQQARKVPGVTAIDLDEDTCTFHIYGEDQDAVKKARSFLEFAEDVIQVPRNLVGKVIGKNGKLIQEIVDKSGVVRVRIEAENEKSVPQEEEIMPPSSLPSNNSRVGPNSSEEKKHLDTKENTHFSQPNSTKVQRVLVVSSIVAGGPQKPEPKAWQGMVPFVFVGTKDSIANATVLLDYHLNYLKEVDQLRLERLQIDEQLRQIGASSRPPPNRTDKEKGYVTDDGQGMGRGSRPYRNRGHGRRGPGYTSGTNSEASNASETESDHRDELSDWSLAPTEEERESFLRRGDGRRRRGGGRGQGGRGRGGGFKGNDDHSRTDNRPRNPREAKGRTADGSLQSASSEGSRLRTGKDRNQKKEKPDSVDGLQPLVNGVP</sequence>
<reference key="1">
    <citation type="journal article" date="1993" name="Nat. Genet.">
        <title>Human and murine FMR-1: alternative splicing and translational initiation downstream of the CGG-repeat.</title>
        <authorList>
            <person name="Ashley C.T. Jr."/>
            <person name="Sutcliffe J.S."/>
            <person name="Kunst C.B."/>
            <person name="Leiner H.A."/>
            <person name="Eichler E.E."/>
            <person name="Nelson D.L."/>
            <person name="Warren S.T."/>
        </authorList>
    </citation>
    <scope>NUCLEOTIDE SEQUENCE [MRNA]</scope>
    <scope>ALTERNATIVE SPLICING</scope>
    <source>
        <strain>BALB/cJ</strain>
        <tissue>Brain</tissue>
    </source>
</reference>
<reference key="2">
    <citation type="journal article" date="1994" name="Cell">
        <title>Fmr1 knockout mice: a model to study fragile X mental retardation.</title>
        <authorList>
            <person name="Bakker C.B."/>
            <person name="Verheij C."/>
            <person name="Willemsen R."/>
            <person name="van der Helm R."/>
            <person name="Oerlemans F."/>
            <person name="Vermey M."/>
            <person name="Bygrave A."/>
            <person name="Hoogeveen A.T."/>
            <person name="Oostra B.A."/>
        </authorList>
    </citation>
    <scope>DISRUPTION PHENOTYPE</scope>
    <scope>TISSUE SPECIFICITY</scope>
</reference>
<reference key="3">
    <citation type="journal article" date="1996" name="EMBO J.">
        <title>A nuclear role for the Fragile X mental retardation protein.</title>
        <authorList>
            <person name="Fridell R.A."/>
            <person name="Benson R.E."/>
            <person name="Hua J."/>
            <person name="Bogerd H.P."/>
            <person name="Cullen B.R."/>
        </authorList>
    </citation>
    <scope>SUBCELLULAR LOCATION</scope>
    <scope>NUCLEOCYTOPLASMIC SHUTTLING</scope>
    <scope>MUTAGENESIS OF 429-LEU--LEU-431</scope>
</reference>
<reference key="4">
    <citation type="journal article" date="1996" name="Hum. Mol. Genet.">
        <title>The fragile X mental retardation protein is a ribonucleoprotein containing both nuclear localization and nuclear export signals.</title>
        <authorList>
            <person name="Eberhart D.E."/>
            <person name="Malter H.E."/>
            <person name="Feng Y."/>
            <person name="Warren S.T."/>
        </authorList>
    </citation>
    <scope>SUBCELLULAR LOCATION</scope>
    <scope>NUCLEOCYTOPLASMIC SHUTTLING</scope>
    <scope>ASSOCIATION WITH POLYRIBOSOME AND MRNP</scope>
    <scope>MUTAGENESIS OF 429-LEU--LEU-434</scope>
</reference>
<reference key="5">
    <citation type="journal article" date="1997" name="Hum. Mol. Genet.">
        <title>Differential expression of FMR1, FXR1 and FXR2 proteins in human brain and testis.</title>
        <authorList>
            <person name="Tamanini F."/>
            <person name="Willemsen R."/>
            <person name="van Unen L."/>
            <person name="Bontekoe C."/>
            <person name="Galjaard H."/>
            <person name="Oostra B.A."/>
            <person name="Hoogeveen A.T."/>
        </authorList>
    </citation>
    <scope>TISSUE SPECIFICITY</scope>
</reference>
<reference key="6">
    <citation type="journal article" date="1997" name="Hum. Mol. Genet.">
        <title>The fragile X mental retardation protein is associated with poly(A)+ mRNA in actively translating polyribosomes.</title>
        <authorList>
            <person name="Corbin F."/>
            <person name="Bouillon M."/>
            <person name="Fortin A."/>
            <person name="Morin S."/>
            <person name="Rousseau F."/>
            <person name="Khandjian E.W."/>
        </authorList>
    </citation>
    <scope>SUBCELLULAR LOCATION</scope>
    <scope>ASSOCIATION WITH POLYRIBOSOME</scope>
    <scope>ASSOCIATION WITH MRNP</scope>
</reference>
<reference key="7">
    <citation type="journal article" date="1997" name="Proc. Natl. Acad. Sci. U.S.A.">
        <title>Abnormal dendritic spines in fragile X knockout mice: maturation and pruning deficits.</title>
        <authorList>
            <person name="Comery T.A."/>
            <person name="Harris J.B."/>
            <person name="Willems P.J."/>
            <person name="Oostra B.A."/>
            <person name="Irwin S.A."/>
            <person name="Weiler I.J."/>
            <person name="Greenough W.T."/>
        </authorList>
    </citation>
    <scope>FUNCTION</scope>
    <scope>DISRUPTION PHENOTYPE</scope>
</reference>
<reference key="8">
    <citation type="journal article" date="1999" name="Hum. Mol. Genet.">
        <title>A novel RNA-binding nuclear protein that interacts with the fragile X mental retardation (FMR1) protein.</title>
        <authorList>
            <person name="Bardoni B."/>
            <person name="Schenck A."/>
            <person name="Mandel J.-L."/>
        </authorList>
    </citation>
    <scope>INTERACTION WITH NUFIP1</scope>
</reference>
<reference key="9">
    <citation type="journal article" date="1999" name="Mol. Cell. Biol.">
        <title>Isolation of an FMRP-associated messenger ribonucleoprotein particle and identification of nucleolin and the fragile X-related proteins as components of the complex.</title>
        <authorList>
            <person name="Ceman S."/>
            <person name="Brown V."/>
            <person name="Warren S.T."/>
        </authorList>
    </citation>
    <scope>INTERACTION WITH FXR1; FXR2 AND NCL</scope>
</reference>
<reference key="10">
    <citation type="journal article" date="2000" name="Biochem. Biophys. Res. Commun.">
        <title>Identification of mouse YB1/p50 as a component of the FMRP-associated mRNP particle.</title>
        <authorList>
            <person name="Ceman S."/>
            <person name="Nelson R."/>
            <person name="Warren S.T."/>
        </authorList>
    </citation>
    <scope>INTERACTION WITH YBX1</scope>
</reference>
<reference key="11">
    <citation type="journal article" date="2001" name="Cell">
        <title>Microarray identification of FMRP-associated brain mRNAs and altered mRNA translational profiles in fragile X syndrome.</title>
        <authorList>
            <person name="Brown V."/>
            <person name="Jin P."/>
            <person name="Ceman S."/>
            <person name="Darnell J.C."/>
            <person name="O'Donnell W.T."/>
            <person name="Tenenbaum S.A."/>
            <person name="Jin X."/>
            <person name="Feng Y."/>
            <person name="Wilkinson K.D."/>
            <person name="Keene J.D."/>
            <person name="Darnell R.B."/>
            <person name="Warren S.T."/>
        </authorList>
    </citation>
    <scope>ASSOCIATION WITH MRNP</scope>
    <scope>RNA-BINDING</scope>
</reference>
<reference key="12">
    <citation type="journal article" date="2001" name="J. Neurosci.">
        <title>Abnormal development of dendritic spines in FMR1 knock-out mice.</title>
        <authorList>
            <person name="Nimchinsky E.A."/>
            <person name="Oberlander A.M."/>
            <person name="Svoboda K."/>
        </authorList>
    </citation>
    <scope>FUNCTION</scope>
    <scope>DISRUPTION PHENOTYPE</scope>
</reference>
<reference key="13">
    <citation type="journal article" date="2001" name="Nucleic Acids Res.">
        <title>The fragile X mental retardation protein inhibits translation via interacting with mRNA.</title>
        <authorList>
            <person name="Li Z."/>
            <person name="Zhang Y."/>
            <person name="Ku L."/>
            <person name="Wilkinson K.D."/>
            <person name="Warren S.T."/>
            <person name="Feng Y."/>
        </authorList>
    </citation>
    <scope>FUNCTION</scope>
    <scope>INTERACTION WITH FXR2</scope>
    <scope>RNA-BINDING</scope>
</reference>
<reference key="14">
    <citation type="journal article" date="2001" name="Proc. Natl. Acad. Sci. U.S.A.">
        <title>A highly conserved protein family interacting with the fragile X mental retardation protein (FMRP) and displaying selective interactions with FMRP-related proteins FXR1P and FXR2P.</title>
        <authorList>
            <person name="Schenck A."/>
            <person name="Bardoni B."/>
            <person name="Moro A."/>
            <person name="Bagni C."/>
            <person name="Mandel J.-L."/>
        </authorList>
    </citation>
    <scope>INTERACTION WITH CYFIP1 AND CYFIP2</scope>
    <scope>SUBCELLULAR LOCATION</scope>
</reference>
<reference key="15">
    <citation type="journal article" date="2002" name="Hum. Mol. Genet.">
        <title>Trapping of messenger RNA by Fragile X Mental Retardation protein into cytoplasmic granules induces translation repression.</title>
        <authorList>
            <person name="Mazroui R."/>
            <person name="Huot M.E."/>
            <person name="Tremblay S."/>
            <person name="Filion C."/>
            <person name="Labelle Y."/>
            <person name="Khandjian E.W."/>
        </authorList>
    </citation>
    <scope>FUNCTION</scope>
</reference>
<reference key="16">
    <citation type="journal article" date="2002" name="J. Biol. Chem.">
        <title>Identification of mRNA/protein (mRNP) complexes containing Puralpha, mStaufen, fragile X protein, and myosin Va and their association with rough endoplasmic reticulum equipped with a kinesin motor.</title>
        <authorList>
            <person name="Ohashi S."/>
            <person name="Koike K."/>
            <person name="Omori A."/>
            <person name="Ichinose S."/>
            <person name="Ohara S."/>
            <person name="Kobayashi S."/>
            <person name="Sato T.A."/>
            <person name="Anzai K."/>
        </authorList>
    </citation>
    <scope>INTERACTION WITH MYO5A AND PURA</scope>
</reference>
<reference key="17">
    <citation type="journal article" date="2002" name="Proc. Natl. Acad. Sci. U.S.A.">
        <title>Altered synaptic plasticity in a mouse model of fragile X mental retardation.</title>
        <authorList>
            <person name="Huber K.M."/>
            <person name="Gallagher S.M."/>
            <person name="Warren S.T."/>
            <person name="Bear M.F."/>
        </authorList>
    </citation>
    <scope>FUNCTION</scope>
    <scope>DISRUPTION PHENOTYPE</scope>
</reference>
<reference key="18">
    <citation type="journal article" date="2003" name="Cell">
        <title>The fragile X syndrome protein FMRP associates with BC1 RNA and regulates the translation of specific mRNAs at synapses.</title>
        <authorList>
            <person name="Zalfa F."/>
            <person name="Giorgi M."/>
            <person name="Primerano B."/>
            <person name="Moro A."/>
            <person name="Di Penta A."/>
            <person name="Reis S."/>
            <person name="Oostra B."/>
            <person name="Bagni C."/>
        </authorList>
    </citation>
    <scope>FUNCTION</scope>
    <scope>ASSOCIATION WITH POLYRIBOSOME AND MRNP</scope>
    <scope>RNA-BINDING</scope>
    <scope>DISRUPTION PHENOTYPE</scope>
</reference>
<reference key="19">
    <citation type="journal article" date="2003" name="Hum. Mol. Genet.">
        <title>Phosphorylation influences the translation state of FMRP-associated polyribosomes.</title>
        <authorList>
            <person name="Ceman S."/>
            <person name="O'Donnell W.T."/>
            <person name="Reed M."/>
            <person name="Patton S."/>
            <person name="Pohl J."/>
            <person name="Warren S.T."/>
        </authorList>
    </citation>
    <scope>FUNCTION</scope>
    <scope>SUBCELLULAR LOCATION</scope>
    <scope>PHOSPHORYLATION AT SER-499</scope>
    <scope>MUTAGENESIS OF SER-499</scope>
    <scope>IDENTIFICATION BY MASS SPECTROMETRY</scope>
</reference>
<reference key="20">
    <citation type="journal article" date="2003" name="Neuron">
        <title>RNA cargoes associating with FMRP reveal deficits in cellular functioning in Fmr1 null mice.</title>
        <authorList>
            <person name="Miyashiro K.Y."/>
            <person name="Beckel-Mitchener A."/>
            <person name="Purk T.P."/>
            <person name="Becker K.G."/>
            <person name="Barret T."/>
            <person name="Liu L."/>
            <person name="Carbonetto S."/>
            <person name="Weiler I.J."/>
            <person name="Greenough W.T."/>
            <person name="Eberwine J."/>
        </authorList>
    </citation>
    <scope>FUNCTION</scope>
    <scope>DISRUPTION PHENOTYPE</scope>
    <scope>ASSOCIATION WITH POLYRIBOSOME</scope>
    <scope>ASSOCIATION WITH MRNP</scope>
</reference>
<reference key="21">
    <citation type="journal article" date="2003" name="Neuroscience">
        <title>The fragile X mental retardation protein binds and regulates a novel class of mRNAs containing U rich target sequences.</title>
        <authorList>
            <person name="Chen L."/>
            <person name="Yun S.W."/>
            <person name="Seto J."/>
            <person name="Liu W."/>
            <person name="Toth M."/>
        </authorList>
    </citation>
    <scope>FUNCTION</scope>
    <scope>DISRUPTION PHENOTYPE</scope>
</reference>
<reference key="22">
    <citation type="journal article" date="2003" name="Proc. Natl. Acad. Sci. U.S.A.">
        <title>The fragile X mental retardation protein is required for type-I metabotropic glutamate receptor-dependent translation of PSD-95.</title>
        <authorList>
            <person name="Todd P.K."/>
            <person name="Mack K.J."/>
            <person name="Malter J.S."/>
        </authorList>
    </citation>
    <scope>FUNCTION</scope>
    <scope>DISRUPTION PHENOTYPE</scope>
    <scope>INDUCTION</scope>
</reference>
<reference key="23">
    <citation type="journal article" date="2004" name="Hum. Mol. Genet.">
        <title>Developmentally-programmed FMRP expression in oligodendrocytes: a potential role of FMRP in regulating translation in oligodendroglia progenitors.</title>
        <authorList>
            <person name="Wang H."/>
            <person name="Ku L."/>
            <person name="Osterhout D.J."/>
            <person name="Li W."/>
            <person name="Ahmadian A."/>
            <person name="Liang Z."/>
            <person name="Feng Y."/>
        </authorList>
    </citation>
    <scope>FUNCTION</scope>
    <scope>ASSOCIATION WITH POLYRIBOSOME</scope>
    <scope>RNA-BINDING</scope>
    <scope>SUBCELLULAR LOCATION</scope>
    <scope>TISSUE SPECIFICITY</scope>
</reference>
<reference key="24">
    <citation type="journal article" date="2004" name="J. Mol. Biol.">
        <title>The C-terminus of fragile X mental retardation protein interacts with the multi-domain Ran-binding protein in the microtubule-organising centre.</title>
        <authorList>
            <person name="Menon R.P."/>
            <person name="Gibson T.J."/>
            <person name="Pastore A."/>
        </authorList>
    </citation>
    <scope>INTERACTION WITH RANBP9</scope>
</reference>
<reference key="25">
    <citation type="journal article" date="2004" name="J. Neurosci.">
        <title>Metabotropic glutamate receptor activation regulates fragile x mental retardation protein and FMR1 mRNA localization differentially in dendrites and at synapses.</title>
        <authorList>
            <person name="Antar L.N."/>
            <person name="Afroz R."/>
            <person name="Dictenberg J.B."/>
            <person name="Carroll R.C."/>
            <person name="Bassell G.J."/>
        </authorList>
    </citation>
    <scope>SUBCELLULAR LOCATION</scope>
</reference>
<reference key="26">
    <citation type="journal article" date="2004" name="J. Neurosci.">
        <title>Fragile X mental retardation protein is associated with translating polyribosomes in neuronal cells.</title>
        <authorList>
            <person name="Stefani G."/>
            <person name="Fraser C.E."/>
            <person name="Darnell J.C."/>
            <person name="Darnell R.B."/>
        </authorList>
    </citation>
    <scope>SUBCELLULAR LOCATION</scope>
    <scope>ASSOCIATION WITH POLYRIBOSOME</scope>
</reference>
<reference key="27">
    <citation type="journal article" date="2004" name="Neuron">
        <title>Kinesin transports RNA: isolation and characterization of an RNA-transporting granule.</title>
        <authorList>
            <person name="Kanai Y."/>
            <person name="Dohmae N."/>
            <person name="Hirokawa N."/>
        </authorList>
    </citation>
    <scope>SUBCELLULAR LOCATION</scope>
    <scope>IDENTIFICATION BY MASS SPECTROMETRY</scope>
</reference>
<reference key="28">
    <citation type="journal article" date="2004" name="Proc. Natl. Acad. Sci. U.S.A.">
        <title>Biochemical evidence for the association of fragile X mental retardation protein with brain polyribosomal ribonucleoparticles.</title>
        <authorList>
            <person name="Khandjian E.W."/>
            <person name="Huot M.E."/>
            <person name="Tremblay S."/>
            <person name="Davidovic L."/>
            <person name="Mazroui R."/>
            <person name="Bardoni B."/>
        </authorList>
    </citation>
    <scope>SUBCELLULAR LOCATION</scope>
    <scope>ASSOCIATION WITH MRNP</scope>
</reference>
<reference key="29">
    <citation type="journal article" date="2004" name="Proc. Natl. Acad. Sci. U.S.A.">
        <title>The fragile X protein controls microtubule-associated protein 1B translation and microtubule stability in brain neuron development.</title>
        <authorList>
            <person name="Lu R."/>
            <person name="Wang H."/>
            <person name="Liang Z."/>
            <person name="Ku L."/>
            <person name="O'donnell W.T."/>
            <person name="Li W."/>
            <person name="Warren S.T."/>
            <person name="Feng Y."/>
        </authorList>
    </citation>
    <scope>FUNCTION</scope>
    <scope>TISSUE SPECIFICITY</scope>
    <scope>DISRUPTION PHENOTYPE</scope>
</reference>
<reference key="30">
    <citation type="journal article" date="2004" name="Proc. Natl. Acad. Sci. U.S.A.">
        <title>Fragile X mental retardation protein is necessary for neurotransmitter-activated protein translation at synapses.</title>
        <authorList>
            <person name="Weiler I.J."/>
            <person name="Spangler C.C."/>
            <person name="Klintsova A.Y."/>
            <person name="Grossman A.W."/>
            <person name="Kim S.H."/>
            <person name="Bertaina-Anglade V."/>
            <person name="Khaliq H."/>
            <person name="de Vries F.E."/>
            <person name="Lambers F.A."/>
            <person name="Hatia F."/>
            <person name="Base C.K."/>
            <person name="Greenough W.T."/>
        </authorList>
    </citation>
    <scope>FUNCTION</scope>
    <scope>DISRUPTION PHENOTYPE</scope>
</reference>
<reference key="31">
    <citation type="journal article" date="2005" name="Genes Brain Behav.">
        <title>Localization of FMRP-associated mRNA granules and requirement of microtubules for activity-dependent trafficking in hippocampal neurons.</title>
        <authorList>
            <person name="Antar L.N."/>
            <person name="Dictenberg J.B."/>
            <person name="Plociniak M."/>
            <person name="Afroz R."/>
            <person name="Bassell G.J."/>
        </authorList>
    </citation>
    <scope>SUBCELLULAR LOCATION</scope>
</reference>
<reference key="32">
    <citation type="journal article" date="2005" name="Genes Dev.">
        <title>Kissing complex RNAs mediate interaction between the Fragile-X mental retardation protein KH2 domain and brain polyribosomes.</title>
        <authorList>
            <person name="Darnell J.C."/>
            <person name="Fraser C.E."/>
            <person name="Mostovetsky O."/>
            <person name="Stefani G."/>
            <person name="Jones T.A."/>
            <person name="Eddy S.R."/>
            <person name="Darnell R.B."/>
        </authorList>
    </citation>
    <scope>ASSOCIATION WITH POLYRIBOSOME</scope>
</reference>
<reference key="33">
    <citation type="journal article" date="2005" name="Mol. Biol. Cell">
        <title>The RNA-binding protein Fragile X-related 1 regulates somite formation in Xenopus laevis.</title>
        <authorList>
            <person name="Huot M.-E."/>
            <person name="Bisson N."/>
            <person name="Davidovic L."/>
            <person name="Mazroui R."/>
            <person name="Labelle Y."/>
            <person name="Moss T."/>
            <person name="Khandjian E.W."/>
        </authorList>
    </citation>
    <scope>TISSUE SPECIFICITY</scope>
</reference>
<reference key="34">
    <citation type="journal article" date="2006" name="Hum. Mol. Genet.">
        <title>Identification and characterization of the methyl arginines in the fragile X mental retardation protein Fmrp.</title>
        <authorList>
            <person name="Stetler A."/>
            <person name="Winograd C."/>
            <person name="Sayegh J."/>
            <person name="Cheever A."/>
            <person name="Patton E."/>
            <person name="Zhang X."/>
            <person name="Clarke S."/>
            <person name="Ceman S."/>
        </authorList>
    </citation>
    <scope>METHYLATION AT ARG-533; ARG-538; ARG-543 AND ARG-545</scope>
</reference>
<reference key="35">
    <citation type="journal article" date="2006" name="Hum. Mol. Genet.">
        <title>Exaggerated behavioral phenotypes in Fmr1/Fxr2 double knockout mice reveal a functional genetic interaction between Fragile X-related proteins.</title>
        <authorList>
            <person name="Spencer C.M."/>
            <person name="Serysheva E."/>
            <person name="Yuva-Paylor L.A."/>
            <person name="Oostra B.A."/>
            <person name="Nelson D.L."/>
            <person name="Paylor R."/>
        </authorList>
    </citation>
    <scope>DISRUPTION PHENOTYPE</scope>
</reference>
<reference key="36">
    <citation type="journal article" date="2006" name="Mol. Cell. Neurosci.">
        <title>Local functions for FMRP in axon growth cone motility and activity-dependent regulation of filopodia and spine synapses.</title>
        <authorList>
            <person name="Antar L.N."/>
            <person name="Li C."/>
            <person name="Zhang H."/>
            <person name="Carroll R.C."/>
            <person name="Bassell G.J."/>
        </authorList>
    </citation>
    <scope>FUNCTION</scope>
    <scope>SUBCELLULAR LOCATION</scope>
    <scope>DISRUPTION PHENOTYPE</scope>
</reference>
<reference key="37">
    <citation type="journal article" date="2006" name="Neuron">
        <title>Dynamic translational and proteasomal regulation of fragile X mental retardation protein controls mGluR-dependent long-term depression.</title>
        <authorList>
            <person name="Hou L."/>
            <person name="Antion M.D."/>
            <person name="Hu D."/>
            <person name="Spencer C.M."/>
            <person name="Paylor R."/>
            <person name="Klann E."/>
        </authorList>
    </citation>
    <scope>FUNCTION</scope>
    <scope>SUBCELLULAR LOCATION</scope>
    <scope>PROTEOLYTIC DEGRADATION</scope>
    <scope>INDUCTION</scope>
    <scope>DISRUPTION PHENOTYPE</scope>
</reference>
<reference key="38">
    <citation type="journal article" date="2006" name="RNA">
        <title>The fragile X mental retardation protein interacts with a distinct mRNA nuclear export factor NXF2.</title>
        <authorList>
            <person name="Lai D."/>
            <person name="Sakkas D."/>
            <person name="Huang Y."/>
        </authorList>
    </citation>
    <scope>FUNCTION</scope>
    <scope>INTERACTION WITH NXF2</scope>
    <scope>SUBCELLULAR LOCATION</scope>
    <scope>TISSUE SPECIFICITY</scope>
</reference>
<reference key="39">
    <citation type="journal article" date="2007" name="J. Neurosci.">
        <title>Dysregulated metabotropic glutamate receptor-dependent translation of AMPA receptor and postsynaptic density-95 mRNAs at synapses in a mouse model of fragile X syndrome.</title>
        <authorList>
            <person name="Muddashetty R.S."/>
            <person name="Kelic S."/>
            <person name="Gross C."/>
            <person name="Xu M."/>
            <person name="Bassell G.J."/>
        </authorList>
    </citation>
    <scope>FUNCTION</scope>
    <scope>ASSOCIATION WITH MRNA</scope>
    <scope>DISRUPTION PHENOTYPE</scope>
</reference>
<reference key="40">
    <citation type="journal article" date="2007" name="Nat. Neurosci.">
        <title>A new function for the fragile X mental retardation protein in regulation of PSD-95 mRNA stability.</title>
        <authorList>
            <person name="Zalfa F."/>
            <person name="Eleuteri B."/>
            <person name="Dickson K.S."/>
            <person name="Mercaldo V."/>
            <person name="De Rubeis S."/>
            <person name="di Penta A."/>
            <person name="Tabolacci E."/>
            <person name="Chiurazzi P."/>
            <person name="Neri G."/>
            <person name="Grant S.G."/>
            <person name="Bagni C."/>
        </authorList>
    </citation>
    <scope>FUNCTION</scope>
    <scope>DISRUPTION PHENOTYPE</scope>
</reference>
<reference key="41">
    <citation type="journal article" date="2007" name="Proc. Natl. Acad. Sci. U.S.A.">
        <title>Fragile X mental retardation protein FMRP and the RNA export factor NXF2 associate with and destabilize Nxf1 mRNA in neuronal cells.</title>
        <authorList>
            <person name="Zhang M."/>
            <person name="Wang Q."/>
            <person name="Huang Y."/>
        </authorList>
    </citation>
    <scope>FUNCTION</scope>
    <scope>INTERACTION WITH NXF2</scope>
    <scope>TISSUE SPECIFICITY</scope>
</reference>
<reference key="42">
    <citation type="journal article" date="2008" name="Cell">
        <title>The fragile X syndrome protein represses activity-dependent translation through CYFIP1, a new 4E-BP.</title>
        <authorList>
            <person name="Napoli I."/>
            <person name="Mercaldo V."/>
            <person name="Boyl P.P."/>
            <person name="Eleuteri B."/>
            <person name="Zalfa F."/>
            <person name="De Rubeis S."/>
            <person name="Di Marino D."/>
            <person name="Mohr E."/>
            <person name="Massimi M."/>
            <person name="Falconi M."/>
            <person name="Witke W."/>
            <person name="Costa-Mattioli M."/>
            <person name="Sonenberg N."/>
            <person name="Achsel T."/>
            <person name="Bagni C."/>
        </authorList>
    </citation>
    <scope>FUNCTION</scope>
    <scope>INTERACTION WITH CYFIP1-EIF4E COMPLEX</scope>
    <scope>ASSOCIATION WITH MRNP</scope>
    <scope>RNA-BINDING</scope>
    <scope>SUBCELLULAR LOCATION</scope>
</reference>
<reference key="43">
    <citation type="journal article" date="2008" name="Dev. Cell">
        <title>A direct role for FMRP in activity-dependent dendritic mRNA transport links filopodial-spine morphogenesis to fragile X syndrome.</title>
        <authorList>
            <person name="Dictenberg J.B."/>
            <person name="Swanger S.A."/>
            <person name="Antar L.N."/>
            <person name="Singer R.H."/>
            <person name="Bassell G.J."/>
        </authorList>
    </citation>
    <scope>FUNCTION</scope>
    <scope>INTERACTION WITH KIF5A</scope>
    <scope>INTERACTION WITH DYNEIN</scope>
    <scope>ASSOCIATION WITH MICROTUBULES</scope>
    <scope>SUBCELLULAR LOCATION</scope>
    <scope>DISRUPTION PHENOTYPE</scope>
</reference>
<reference key="44">
    <citation type="journal article" date="2008" name="J. Biol. Chem.">
        <title>In vitro and in cellulo evidences for association of the survival of motor neuron complex with the fragile X mental retardation protein.</title>
        <authorList>
            <person name="Piazzon N."/>
            <person name="Rage F."/>
            <person name="Schlotter F."/>
            <person name="Moine H."/>
            <person name="Branlant C."/>
            <person name="Massenet S."/>
        </authorList>
    </citation>
    <scope>ASSOCIATION WITH THE SMN CORE COMPLEX</scope>
</reference>
<reference key="45">
    <citation type="journal article" date="2008" name="Nucleic Acids Res.">
        <title>The G-quartet containing FMRP binding site in FMR1 mRNA is a potent exonic splicing enhancer.</title>
        <authorList>
            <person name="Didiot M.C."/>
            <person name="Tian Z."/>
            <person name="Schaeffer C."/>
            <person name="Subramanian M."/>
            <person name="Mandel J.L."/>
            <person name="Moine H."/>
        </authorList>
    </citation>
    <scope>FUNCTION</scope>
    <scope>DISRUPTION PHENOTYPE</scope>
</reference>
<reference key="46">
    <citation type="journal article" date="2009" name="J. Biol. Chem.">
        <title>Fragile X mental retardation protein regulates the levels of scaffold proteins and glutamate receptors in postsynaptic densities.</title>
        <authorList>
            <person name="Schuett J."/>
            <person name="Falley K."/>
            <person name="Richter D."/>
            <person name="Kreienkamp H.J."/>
            <person name="Kindler S."/>
        </authorList>
    </citation>
    <scope>FUNCTION</scope>
    <scope>DISRUPTION PHENOTYPE</scope>
</reference>
<reference key="47">
    <citation type="journal article" date="2009" name="J. Neurosci.">
        <title>The FXG: a presynaptic fragile X granule expressed in a subset of developing brain circuits.</title>
        <authorList>
            <person name="Christie S.B."/>
            <person name="Akins M.R."/>
            <person name="Schwob J.E."/>
            <person name="Fallon J.R."/>
        </authorList>
    </citation>
    <scope>SUBCELLULAR LOCATION</scope>
    <scope>TISSUE SPECIFICITY</scope>
</reference>
<reference key="48">
    <citation type="journal article" date="2009" name="PLoS Biol.">
        <title>A novel function for fragile X mental retardation protein in translational activation.</title>
        <authorList>
            <person name="Bechara E.G."/>
            <person name="Didiot M.C."/>
            <person name="Melko M."/>
            <person name="Davidovic L."/>
            <person name="Bensaid M."/>
            <person name="Martin P."/>
            <person name="Castets M."/>
            <person name="Pognonec P."/>
            <person name="Khandjian E.W."/>
            <person name="Moine H."/>
            <person name="Bardoni B."/>
        </authorList>
    </citation>
    <scope>FUNCTION</scope>
    <scope>RNA-BINDING</scope>
    <scope>DISRUPTION PHENOTYPE</scope>
</reference>
<reference key="49">
    <citation type="journal article" date="2010" name="Cell">
        <title>A tissue-specific atlas of mouse protein phosphorylation and expression.</title>
        <authorList>
            <person name="Huttlin E.L."/>
            <person name="Jedrychowski M.P."/>
            <person name="Elias J.E."/>
            <person name="Goswami T."/>
            <person name="Rad R."/>
            <person name="Beausoleil S.A."/>
            <person name="Villen J."/>
            <person name="Haas W."/>
            <person name="Sowa M.E."/>
            <person name="Gygi S.P."/>
        </authorList>
    </citation>
    <scope>PHOSPHORYLATION [LARGE SCALE ANALYSIS] AT THR-462 AND SER-602</scope>
    <scope>IDENTIFICATION BY MASS SPECTROMETRY [LARGE SCALE ANALYSIS]</scope>
    <source>
        <tissue>Brain</tissue>
        <tissue>Kidney</tissue>
        <tissue>Lung</tissue>
        <tissue>Spleen</tissue>
        <tissue>Testis</tissue>
    </source>
</reference>
<reference key="50">
    <citation type="journal article" date="2010" name="Nat. Neurosci.">
        <title>Fragile X mental retardation protein controls gating of the sodium-activated potassium channel Slack.</title>
        <authorList>
            <person name="Brown M.R."/>
            <person name="Kronengold J."/>
            <person name="Gazula V.R."/>
            <person name="Chen Y."/>
            <person name="Strumbos J.G."/>
            <person name="Sigworth F.J."/>
            <person name="Navaratnam D."/>
            <person name="Kaczmarek L.K."/>
        </authorList>
    </citation>
    <scope>FUNCTION</scope>
    <scope>INTERACTION WITH KCNT1</scope>
</reference>
<reference key="51">
    <citation type="journal article" date="2010" name="Neuron">
        <title>Regulation of synaptic structure and function by FMRP-associated microRNAs miR-125b and miR-132.</title>
        <authorList>
            <person name="Edbauer D."/>
            <person name="Neilson J.R."/>
            <person name="Foster K.A."/>
            <person name="Wang C.F."/>
            <person name="Seeburg D.P."/>
            <person name="Batterton M.N."/>
            <person name="Tada T."/>
            <person name="Dolan B.M."/>
            <person name="Sharp P.A."/>
            <person name="Sheng M."/>
        </authorList>
    </citation>
    <scope>FUNCTION</scope>
    <scope>RNA-BINDING</scope>
</reference>
<reference key="52">
    <citation type="journal article" date="2011" name="Cell">
        <title>FMRP stalls ribosomal translocation on mRNAs linked to synaptic function and autism.</title>
        <authorList>
            <person name="Darnell J.C."/>
            <person name="Van Driesche S.J."/>
            <person name="Zhang C."/>
            <person name="Hung K.Y."/>
            <person name="Mele A."/>
            <person name="Fraser C.E."/>
            <person name="Stone E.F."/>
            <person name="Chen C."/>
            <person name="Fak J.J."/>
            <person name="Chi S.W."/>
            <person name="Licatalosi D.D."/>
            <person name="Richter J.D."/>
            <person name="Darnell R.B."/>
        </authorList>
    </citation>
    <scope>FUNCTION</scope>
    <scope>INTERACTION WITH RPLP0</scope>
    <scope>RNA-BINDING</scope>
    <scope>ASSOCIATION WITH POLYRIBOSOME</scope>
    <scope>DISRUPTION PHENOTYPE</scope>
</reference>
<reference key="53">
    <citation type="journal article" date="2011" name="J. Neurosci.">
        <title>Fragile X mental retardation protein regulates protein expression and mRNA translation of the potassium channel Kv4.2.</title>
        <authorList>
            <person name="Gross C."/>
            <person name="Yao X."/>
            <person name="Pong D.L."/>
            <person name="Jeromin A."/>
            <person name="Bassell G.J."/>
        </authorList>
    </citation>
    <scope>FUNCTION</scope>
    <scope>RNA-BINDING</scope>
    <scope>DISRUPTION PHENOTYPE</scope>
</reference>
<reference key="54">
    <citation type="journal article" date="2012" name="Nature">
        <title>FMRP targets distinct mRNA sequence elements to regulate protein expression.</title>
        <authorList>
            <person name="Ascano M. Jr."/>
            <person name="Mukherjee N."/>
            <person name="Bandaru P."/>
            <person name="Miller J.B."/>
            <person name="Nusbaum J.D."/>
            <person name="Corcoran D.L."/>
            <person name="Langlois C."/>
            <person name="Munschauer M."/>
            <person name="Dewell S."/>
            <person name="Hafner M."/>
            <person name="Williams Z."/>
            <person name="Ohler U."/>
            <person name="Tuschl T."/>
        </authorList>
    </citation>
    <scope>FUNCTION</scope>
    <scope>DISRUPTION PHENOTYPE</scope>
</reference>
<reference key="55">
    <citation type="journal article" date="2013" name="Mol. Cell. Neurosci.">
        <title>FMRP and myelin protein expression in oligodendrocytes.</title>
        <authorList>
            <person name="Giampetruzzi A."/>
            <person name="Carson J.H."/>
            <person name="Barbarese E."/>
        </authorList>
    </citation>
    <scope>LACK OF FUNCTION</scope>
    <scope>TISSUE SPECIFICITY</scope>
    <scope>DISRUPTION PHENOTYPE</scope>
</reference>
<reference key="56">
    <citation type="journal article" date="2013" name="PLoS ONE">
        <title>Identification and characterisation of Simiate, a novel protein linked to the fragile X syndrome.</title>
        <authorList>
            <person name="Derlig K."/>
            <person name="Giessl A."/>
            <person name="Brandstatter J.H."/>
            <person name="Enz R."/>
            <person name="Dahlhaus R."/>
        </authorList>
    </citation>
    <scope>DISRUPTION PHENOTYPE</scope>
    <scope>RNA-BINDING</scope>
</reference>
<reference key="57">
    <citation type="journal article" date="2014" name="Cell">
        <title>A chromatin-dependent role of the fragile X mental retardation protein FMRP in the DNA damage response.</title>
        <authorList>
            <person name="Alpatov R."/>
            <person name="Lesch B.J."/>
            <person name="Nakamoto-Kinoshita M."/>
            <person name="Blanco A."/>
            <person name="Chen S."/>
            <person name="Stuetzer A."/>
            <person name="Armache K.J."/>
            <person name="Simon M.D."/>
            <person name="Xu C."/>
            <person name="Ali M."/>
            <person name="Murn J."/>
            <person name="Prisic S."/>
            <person name="Kutateladze T.G."/>
            <person name="Vakoc C.R."/>
            <person name="Min J."/>
            <person name="Kingston R.E."/>
            <person name="Fischle W."/>
            <person name="Warren S.T."/>
            <person name="Page D.C."/>
            <person name="Shi Y."/>
        </authorList>
    </citation>
    <scope>FUNCTION</scope>
    <scope>CHROMATIN BINDING</scope>
    <scope>SUBCELLULAR LOCATION</scope>
    <scope>DISRUPTION PHENOTYPE</scope>
</reference>
<reference key="58">
    <citation type="journal article" date="2014" name="Cell Rep.">
        <title>MOV10 and FMRP regulate AGO2 association with microRNA recognition elements.</title>
        <authorList>
            <person name="Kenny P.J."/>
            <person name="Zhou H."/>
            <person name="Kim M."/>
            <person name="Skariah G."/>
            <person name="Khetani R.S."/>
            <person name="Drnevich J."/>
            <person name="Arcila M.L."/>
            <person name="Kosik K.S."/>
            <person name="Ceman S."/>
        </authorList>
    </citation>
    <scope>INTERACTION WITH MOV10</scope>
</reference>
<reference key="59">
    <citation type="journal article" date="2014" name="Mol. Cell. Proteomics">
        <title>Immunoaffinity enrichment and mass spectrometry analysis of protein methylation.</title>
        <authorList>
            <person name="Guo A."/>
            <person name="Gu H."/>
            <person name="Zhou J."/>
            <person name="Mulhern D."/>
            <person name="Wang Y."/>
            <person name="Lee K.A."/>
            <person name="Yang V."/>
            <person name="Aguiar M."/>
            <person name="Kornhauser J."/>
            <person name="Jia X."/>
            <person name="Ren J."/>
            <person name="Beausoleil S.A."/>
            <person name="Silva J.C."/>
            <person name="Vemulapalli V."/>
            <person name="Bedford M.T."/>
            <person name="Comb M.J."/>
        </authorList>
    </citation>
    <scope>METHYLATION [LARGE SCALE ANALYSIS] AT ARG-470</scope>
    <scope>IDENTIFICATION BY MASS SPECTROMETRY [LARGE SCALE ANALYSIS]</scope>
    <source>
        <tissue>Brain</tissue>
        <tissue>Embryo</tissue>
    </source>
</reference>
<reference key="60">
    <citation type="journal article" date="2014" name="Nat. Commun.">
        <title>Fragile X mental retardation protein controls synaptic vesicle exocytosis by modulating N-type calcium channel density.</title>
        <authorList>
            <person name="Ferron L."/>
            <person name="Nieto-Rostro M."/>
            <person name="Cassidy J.S."/>
            <person name="Dolphin A.C."/>
        </authorList>
    </citation>
    <scope>FUNCTION</scope>
    <scope>INTERACTION WITH CACNA1B</scope>
    <scope>SUBCELLULAR LOCATION</scope>
    <scope>DISRUPTION PHENOTYPE</scope>
</reference>
<reference key="61">
    <citation type="journal article" date="2014" name="RNA Biol.">
        <title>FMRP interacts with G-quadruplex structures in the 3'-UTR of its dendritic target Shank1 mRNA.</title>
        <authorList>
            <person name="Zhang Y."/>
            <person name="Gaetano C.M."/>
            <person name="Williams K.R."/>
            <person name="Bassell G.J."/>
            <person name="Mihailescu M.R."/>
        </authorList>
    </citation>
    <scope>RNA-BINDING</scope>
</reference>
<reference key="62">
    <citation type="journal article" date="2015" name="Proc. Natl. Acad. Sci. U.S.A.">
        <title>Independent role for presynaptic FMRP revealed by an FMR1 missense mutation associated with intellectual disability and seizures.</title>
        <authorList>
            <person name="Myrick L.K."/>
            <person name="Deng P.Y."/>
            <person name="Hashimoto H."/>
            <person name="Oh Y.M."/>
            <person name="Cho Y."/>
            <person name="Poidevin M.J."/>
            <person name="Suhl J.A."/>
            <person name="Visootsak J."/>
            <person name="Cavalli V."/>
            <person name="Jin P."/>
            <person name="Cheng X."/>
            <person name="Warren S.T."/>
            <person name="Klyachko V.A."/>
        </authorList>
    </citation>
    <scope>FUNCTION</scope>
    <scope>INTERACTION WITH KCNMB4</scope>
    <scope>DISRUPTION PHENOTYPE</scope>
</reference>
<reference key="63">
    <citation type="journal article" date="2016" name="Elife">
        <title>Sub-synaptic, multiplexed analysis of proteins reveals Fragile X related protein 2 is mislocalized in Fmr1 KO synapses.</title>
        <authorList>
            <person name="Wang G.X."/>
            <person name="Smith S.J."/>
            <person name="Mourrain P."/>
        </authorList>
    </citation>
    <scope>SUBCELLULAR LOCATION</scope>
    <scope>DISRUPTION PHENOTYPE</scope>
</reference>
<reference key="64">
    <citation type="journal article" date="2016" name="ENeuro">
        <title>Mammalian FMRP S499 Is Phosphorylated by CK2 and Promotes Secondary Phosphorylation of FMRP.</title>
        <authorList>
            <person name="Bartley C.M."/>
            <person name="O'Keefe R.A."/>
            <person name="Blice-Baum A."/>
            <person name="Mihailescu M.R."/>
            <person name="Gong X."/>
            <person name="Miyares L."/>
            <person name="Karaca E."/>
            <person name="Bordey A."/>
        </authorList>
    </citation>
    <scope>PHOSPHORYLATION AT SER-499</scope>
</reference>
<reference key="65">
    <citation type="journal article" date="2019" name="J. Biol. Chem.">
        <title>The RNA-binding protein FMRP facilitates the nuclear export of N6-methyladenosine-containing mRNAs.</title>
        <authorList>
            <person name="Hsu P.J."/>
            <person name="Shi H."/>
            <person name="Zhu A.C."/>
            <person name="Lu Z."/>
            <person name="Miller N."/>
            <person name="Edens B.M."/>
            <person name="Ma Y.C."/>
            <person name="He C."/>
        </authorList>
    </citation>
    <scope>FUNCTION</scope>
</reference>
<reference key="66">
    <citation type="journal article" date="2019" name="Cell Rep.">
        <title>FMRP Modulates Neural Differentiation through m6A-Dependent mRNA Nuclear Export.</title>
        <authorList>
            <person name="Edens B.M."/>
            <person name="Vissers C."/>
            <person name="Su J."/>
            <person name="Arumugam S."/>
            <person name="Xu Z."/>
            <person name="Shi H."/>
            <person name="Miller N."/>
            <person name="Rojas Ringeling F."/>
            <person name="Ming G.L."/>
            <person name="He C."/>
            <person name="Song H."/>
            <person name="Ma Y.C."/>
        </authorList>
    </citation>
    <scope>FUNCTION</scope>
    <scope>SUBCELLULAR LOCATION</scope>
    <scope>DISRUPTION PHENOTYPE</scope>
</reference>
<protein>
    <recommendedName>
        <fullName evidence="71">Fragile X messenger ribonucleoprotein 1</fullName>
    </recommendedName>
    <alternativeName>
        <fullName evidence="71">Fragile X messenger ribonucleoprotein</fullName>
        <shortName evidence="68">FMRP</shortName>
    </alternativeName>
    <alternativeName>
        <fullName evidence="70">Protein FMR-1</fullName>
        <shortName>mFmr1p</shortName>
    </alternativeName>
</protein>
<evidence type="ECO:0000250" key="1">
    <source>
        <dbReference type="UniProtKB" id="Q06787"/>
    </source>
</evidence>
<evidence type="ECO:0000250" key="2">
    <source>
        <dbReference type="UniProtKB" id="Q80WE1"/>
    </source>
</evidence>
<evidence type="ECO:0000255" key="3">
    <source>
        <dbReference type="PROSITE-ProRule" id="PRU00117"/>
    </source>
</evidence>
<evidence type="ECO:0000255" key="4">
    <source>
        <dbReference type="PROSITE-ProRule" id="PRU00973"/>
    </source>
</evidence>
<evidence type="ECO:0000256" key="5">
    <source>
        <dbReference type="SAM" id="MobiDB-lite"/>
    </source>
</evidence>
<evidence type="ECO:0000269" key="6">
    <source>
    </source>
</evidence>
<evidence type="ECO:0000269" key="7">
    <source>
    </source>
</evidence>
<evidence type="ECO:0000269" key="8">
    <source>
    </source>
</evidence>
<evidence type="ECO:0000269" key="9">
    <source>
    </source>
</evidence>
<evidence type="ECO:0000269" key="10">
    <source>
    </source>
</evidence>
<evidence type="ECO:0000269" key="11">
    <source>
    </source>
</evidence>
<evidence type="ECO:0000269" key="12">
    <source>
    </source>
</evidence>
<evidence type="ECO:0000269" key="13">
    <source>
    </source>
</evidence>
<evidence type="ECO:0000269" key="14">
    <source>
    </source>
</evidence>
<evidence type="ECO:0000269" key="15">
    <source>
    </source>
</evidence>
<evidence type="ECO:0000269" key="16">
    <source>
    </source>
</evidence>
<evidence type="ECO:0000269" key="17">
    <source>
    </source>
</evidence>
<evidence type="ECO:0000269" key="18">
    <source>
    </source>
</evidence>
<evidence type="ECO:0000269" key="19">
    <source>
    </source>
</evidence>
<evidence type="ECO:0000269" key="20">
    <source>
    </source>
</evidence>
<evidence type="ECO:0000269" key="21">
    <source>
    </source>
</evidence>
<evidence type="ECO:0000269" key="22">
    <source>
    </source>
</evidence>
<evidence type="ECO:0000269" key="23">
    <source>
    </source>
</evidence>
<evidence type="ECO:0000269" key="24">
    <source>
    </source>
</evidence>
<evidence type="ECO:0000269" key="25">
    <source>
    </source>
</evidence>
<evidence type="ECO:0000269" key="26">
    <source>
    </source>
</evidence>
<evidence type="ECO:0000269" key="27">
    <source>
    </source>
</evidence>
<evidence type="ECO:0000269" key="28">
    <source>
    </source>
</evidence>
<evidence type="ECO:0000269" key="29">
    <source>
    </source>
</evidence>
<evidence type="ECO:0000269" key="30">
    <source>
    </source>
</evidence>
<evidence type="ECO:0000269" key="31">
    <source>
    </source>
</evidence>
<evidence type="ECO:0000269" key="32">
    <source>
    </source>
</evidence>
<evidence type="ECO:0000269" key="33">
    <source>
    </source>
</evidence>
<evidence type="ECO:0000269" key="34">
    <source>
    </source>
</evidence>
<evidence type="ECO:0000269" key="35">
    <source>
    </source>
</evidence>
<evidence type="ECO:0000269" key="36">
    <source>
    </source>
</evidence>
<evidence type="ECO:0000269" key="37">
    <source>
    </source>
</evidence>
<evidence type="ECO:0000269" key="38">
    <source>
    </source>
</evidence>
<evidence type="ECO:0000269" key="39">
    <source>
    </source>
</evidence>
<evidence type="ECO:0000269" key="40">
    <source>
    </source>
</evidence>
<evidence type="ECO:0000269" key="41">
    <source>
    </source>
</evidence>
<evidence type="ECO:0000269" key="42">
    <source>
    </source>
</evidence>
<evidence type="ECO:0000269" key="43">
    <source>
    </source>
</evidence>
<evidence type="ECO:0000269" key="44">
    <source>
    </source>
</evidence>
<evidence type="ECO:0000269" key="45">
    <source>
    </source>
</evidence>
<evidence type="ECO:0000269" key="46">
    <source>
    </source>
</evidence>
<evidence type="ECO:0000269" key="47">
    <source>
    </source>
</evidence>
<evidence type="ECO:0000269" key="48">
    <source>
    </source>
</evidence>
<evidence type="ECO:0000269" key="49">
    <source>
    </source>
</evidence>
<evidence type="ECO:0000269" key="50">
    <source>
    </source>
</evidence>
<evidence type="ECO:0000269" key="51">
    <source>
    </source>
</evidence>
<evidence type="ECO:0000269" key="52">
    <source>
    </source>
</evidence>
<evidence type="ECO:0000269" key="53">
    <source>
    </source>
</evidence>
<evidence type="ECO:0000269" key="54">
    <source>
    </source>
</evidence>
<evidence type="ECO:0000269" key="55">
    <source>
    </source>
</evidence>
<evidence type="ECO:0000269" key="56">
    <source>
    </source>
</evidence>
<evidence type="ECO:0000269" key="57">
    <source>
    </source>
</evidence>
<evidence type="ECO:0000269" key="58">
    <source>
    </source>
</evidence>
<evidence type="ECO:0000269" key="59">
    <source>
    </source>
</evidence>
<evidence type="ECO:0000269" key="60">
    <source>
    </source>
</evidence>
<evidence type="ECO:0000269" key="61">
    <source>
    </source>
</evidence>
<evidence type="ECO:0000269" key="62">
    <source>
    </source>
</evidence>
<evidence type="ECO:0000269" key="63">
    <source>
    </source>
</evidence>
<evidence type="ECO:0000269" key="64">
    <source>
    </source>
</evidence>
<evidence type="ECO:0000269" key="65">
    <source>
    </source>
</evidence>
<evidence type="ECO:0000269" key="66">
    <source>
    </source>
</evidence>
<evidence type="ECO:0000269" key="67">
    <source>
    </source>
</evidence>
<evidence type="ECO:0000303" key="68">
    <source>
    </source>
</evidence>
<evidence type="ECO:0000303" key="69">
    <source>
    </source>
</evidence>
<evidence type="ECO:0000303" key="70">
    <source>
    </source>
</evidence>
<evidence type="ECO:0000305" key="71"/>
<evidence type="ECO:0000312" key="72">
    <source>
        <dbReference type="MGI" id="MGI:95564"/>
    </source>
</evidence>
<evidence type="ECO:0007744" key="73">
    <source>
    </source>
</evidence>
<evidence type="ECO:0007744" key="74">
    <source>
    </source>
</evidence>
<feature type="chain" id="PRO_0000050103" description="Fragile X messenger ribonucleoprotein 1">
    <location>
        <begin position="1"/>
        <end position="614"/>
    </location>
</feature>
<feature type="domain" description="Agenet-like 1" evidence="4">
    <location>
        <begin position="4"/>
        <end position="50"/>
    </location>
</feature>
<feature type="domain" description="Agenet-like 2" evidence="4">
    <location>
        <begin position="63"/>
        <end position="115"/>
    </location>
</feature>
<feature type="domain" description="KH 1" evidence="3">
    <location>
        <begin position="222"/>
        <end position="251"/>
    </location>
</feature>
<feature type="domain" description="KH 2" evidence="3">
    <location>
        <begin position="285"/>
        <end position="314"/>
    </location>
</feature>
<feature type="region of interest" description="Required for nuclear localization" evidence="63">
    <location>
        <begin position="1"/>
        <end position="184"/>
    </location>
</feature>
<feature type="region of interest" description="Necessary for interaction with CYFIP1, CYFIP2, FXR1 and FXR2" evidence="1 11">
    <location>
        <begin position="172"/>
        <end position="211"/>
    </location>
</feature>
<feature type="region of interest" description="Disordered" evidence="5">
    <location>
        <begin position="323"/>
        <end position="369"/>
    </location>
</feature>
<feature type="region of interest" description="Required for nuclear export" evidence="1">
    <location>
        <begin position="396"/>
        <end position="490"/>
    </location>
</feature>
<feature type="region of interest" description="Interaction with RANBP9" evidence="1">
    <location>
        <begin position="418"/>
        <end position="614"/>
    </location>
</feature>
<feature type="region of interest" description="Disordered" evidence="5">
    <location>
        <begin position="442"/>
        <end position="614"/>
    </location>
</feature>
<feature type="region of interest" description="RNA-binding RGG-box">
    <location>
        <begin position="534"/>
        <end position="547"/>
    </location>
</feature>
<feature type="short sequence motif" description="Nuclear export signal" evidence="63">
    <location>
        <begin position="423"/>
        <end position="442"/>
    </location>
</feature>
<feature type="short sequence motif" description="Nucleolar localization signal 1" evidence="1">
    <location>
        <begin position="526"/>
        <end position="533"/>
    </location>
</feature>
<feature type="short sequence motif" description="Nucleolar localization signal 2" evidence="1">
    <location>
        <begin position="595"/>
        <end position="599"/>
    </location>
</feature>
<feature type="compositionally biased region" description="Polar residues" evidence="5">
    <location>
        <begin position="338"/>
        <end position="349"/>
    </location>
</feature>
<feature type="compositionally biased region" description="Basic and acidic residues" evidence="5">
    <location>
        <begin position="350"/>
        <end position="362"/>
    </location>
</feature>
<feature type="compositionally biased region" description="Basic residues" evidence="5">
    <location>
        <begin position="473"/>
        <end position="483"/>
    </location>
</feature>
<feature type="compositionally biased region" description="Low complexity" evidence="5">
    <location>
        <begin position="491"/>
        <end position="500"/>
    </location>
</feature>
<feature type="compositionally biased region" description="Gly residues" evidence="5">
    <location>
        <begin position="537"/>
        <end position="550"/>
    </location>
</feature>
<feature type="compositionally biased region" description="Basic and acidic residues" evidence="5">
    <location>
        <begin position="551"/>
        <end position="572"/>
    </location>
</feature>
<feature type="compositionally biased region" description="Polar residues" evidence="5">
    <location>
        <begin position="575"/>
        <end position="584"/>
    </location>
</feature>
<feature type="compositionally biased region" description="Basic and acidic residues" evidence="5">
    <location>
        <begin position="585"/>
        <end position="602"/>
    </location>
</feature>
<feature type="modified residue" description="N-acetylmethionine" evidence="1">
    <location>
        <position position="1"/>
    </location>
</feature>
<feature type="modified residue" description="Phosphoserine" evidence="2">
    <location>
        <position position="336"/>
    </location>
</feature>
<feature type="modified residue" description="Phosphoserine" evidence="2">
    <location>
        <position position="337"/>
    </location>
</feature>
<feature type="modified residue" description="Phosphoserine" evidence="2">
    <location>
        <position position="349"/>
    </location>
</feature>
<feature type="modified residue" description="Phosphoserine" evidence="2">
    <location>
        <position position="350"/>
    </location>
</feature>
<feature type="modified residue" description="Phosphoserine" evidence="1">
    <location>
        <position position="369"/>
    </location>
</feature>
<feature type="modified residue" description="Phosphothreonine" evidence="73">
    <location>
        <position position="462"/>
    </location>
</feature>
<feature type="modified residue" description="Omega-N-methylarginine" evidence="74">
    <location>
        <position position="470"/>
    </location>
</feature>
<feature type="modified residue" description="Phosphoserine; by CK2" evidence="19 60">
    <location>
        <position position="499"/>
    </location>
</feature>
<feature type="modified residue" description="Phosphothreonine" evidence="1">
    <location>
        <position position="501"/>
    </location>
</feature>
<feature type="modified residue" description="Phosphoserine" evidence="1">
    <location>
        <position position="503"/>
    </location>
</feature>
<feature type="modified residue" description="Phosphoserine" evidence="1">
    <location>
        <position position="510"/>
    </location>
</feature>
<feature type="modified residue" description="Phosphoserine" evidence="1">
    <location>
        <position position="513"/>
    </location>
</feature>
<feature type="modified residue" description="Phosphothreonine" evidence="1">
    <location>
        <position position="517"/>
    </location>
</feature>
<feature type="modified residue" description="Asymmetric dimethylarginine; alternate" evidence="32">
    <location>
        <position position="533"/>
    </location>
</feature>
<feature type="modified residue" description="Omega-N-methylarginine; alternate" evidence="32">
    <location>
        <position position="533"/>
    </location>
</feature>
<feature type="modified residue" description="Asymmetric dimethylarginine; alternate" evidence="32">
    <location>
        <position position="538"/>
    </location>
</feature>
<feature type="modified residue" description="Omega-N-methylarginine; alternate" evidence="32">
    <location>
        <position position="538"/>
    </location>
</feature>
<feature type="modified residue" description="Asymmetric dimethylarginine; alternate" evidence="32">
    <location>
        <position position="543"/>
    </location>
</feature>
<feature type="modified residue" description="Omega-N-methylarginine; alternate" evidence="32">
    <location>
        <position position="543"/>
    </location>
</feature>
<feature type="modified residue" description="Asymmetric dimethylarginine; alternate" evidence="32">
    <location>
        <position position="545"/>
    </location>
</feature>
<feature type="modified residue" description="Omega-N-methylarginine; alternate" evidence="32">
    <location>
        <position position="545"/>
    </location>
</feature>
<feature type="modified residue" description="Phosphothreonine" evidence="1">
    <location>
        <position position="572"/>
    </location>
</feature>
<feature type="modified residue" description="Phosphoserine" evidence="73">
    <location>
        <position position="602"/>
    </location>
</feature>
<feature type="splice variant" id="VSP_002827" description="In isoform 7, isoform 8, isoform 9, isoform 10, isoform 11 and isoform 12." evidence="71">
    <location>
        <begin position="375"/>
        <end position="395"/>
    </location>
</feature>
<feature type="splice variant" id="VSP_002834" description="In isoform 6 and isoform 12." evidence="71">
    <original>EVDQLRLERLQIDEQLRQIGASSRPPPNRTDKEKGYVTDDGQGMGRGSRPYRNRGHGRRGPGYTSGTNSEASNASETESDHRDELSDW</original>
    <variation>LQQRKRGRASCAEETDGGVEEEEEDKEEEEEEEASKETTIIPEQIIVHVIQERLKEEQLMDPCRVPPVKGAGCARVKIVTRRRKSQTA</variation>
    <location>
        <begin position="425"/>
        <end position="512"/>
    </location>
</feature>
<feature type="splice variant" id="VSP_002831" description="In isoform 4 and isoform 10." evidence="71">
    <original>EVDQLRLERLQIDEQLRQIGASSR</original>
    <variation>ELILKHQMLLKQNLTTETNSVIGH</variation>
    <location>
        <begin position="425"/>
        <end position="448"/>
    </location>
</feature>
<feature type="splice variant" id="VSP_002832" description="In isoform 5 and isoform 11." evidence="71">
    <original>EVDQLRLERLQI</original>
    <variation>NLTTETNSVIGH</variation>
    <location>
        <begin position="425"/>
        <end position="436"/>
    </location>
</feature>
<feature type="splice variant" id="VSP_002833" description="In isoform 5 and isoform 11." evidence="71">
    <location>
        <begin position="437"/>
        <end position="614"/>
    </location>
</feature>
<feature type="splice variant" id="VSP_002830" description="In isoform 4 and isoform 10." evidence="71">
    <location>
        <begin position="449"/>
        <end position="614"/>
    </location>
</feature>
<feature type="splice variant" id="VSP_002829" description="In isoform 3 and isoform 9." evidence="71">
    <location>
        <begin position="490"/>
        <end position="514"/>
    </location>
</feature>
<feature type="splice variant" id="VSP_002828" description="In isoform 2 and isoform 8." evidence="71">
    <location>
        <begin position="490"/>
        <end position="501"/>
    </location>
</feature>
<feature type="splice variant" id="VSP_002835" description="In isoform 6 and isoform 12." evidence="71">
    <location>
        <begin position="513"/>
        <end position="614"/>
    </location>
</feature>
<feature type="mutagenesis site" description="Inhibits nuclear export." evidence="63">
    <original>LRLERL</original>
    <variation>ARAERA</variation>
    <location>
        <begin position="429"/>
        <end position="434"/>
    </location>
</feature>
<feature type="mutagenesis site" description="Inhibits nuclear export." evidence="64">
    <original>LRL</original>
    <variation>ARA</variation>
    <location>
        <begin position="429"/>
        <end position="431"/>
    </location>
</feature>
<feature type="mutagenesis site" description="Loss of phosphorylation." evidence="19">
    <original>S</original>
    <variation>A</variation>
    <location>
        <position position="499"/>
    </location>
</feature>
<feature type="mutagenesis site" description="Leads to phosphorylation on other serine residues." evidence="19">
    <original>S</original>
    <variation>D</variation>
    <location>
        <position position="499"/>
    </location>
</feature>
<comment type="function">
    <text evidence="1 2 9 10 12 13 15 17 18 19 20 21 27 28 33 35 36 37 38 39 41 42 43 44 46 47 48 49 50 51 52 53 54 55 57 58 61">Multifunctional polyribosome-associated RNA-binding protein that plays a central role in neuronal development and synaptic plasticity through the regulation of alternative mRNA splicing, mRNA stability, mRNA dendritic transport and postsynaptic local protein synthesis of target mRNAs (PubMed:11438589, PubMed:12032354, PubMed:15475576, PubMed:16631377, PubMed:16790844, PubMed:17417632, PubMed:17548835, PubMed:18539120, PubMed:18653529, PubMed:19166269, PubMed:19640847, PubMed:20159450, PubMed:21784246, PubMed:23235829, PubMed:24813610). Acts as an mRNA regulator by mediating formation of some phase-separated membraneless compartment: undergoes liquid-liquid phase separation upon binding to target mRNAs, leading to assemble mRNAs into cytoplasmic ribonucleoprotein granules that concentrate mRNAs with associated regulatory factors (PubMed:12417522). Plays a role in the alternative splicing of its own mRNA (PubMed:18653529). Stabilizes the scaffolding postsynaptic density protein DLG4/PSD-95 and the myelin basic protein MBP mRNAs in hippocampal neurons and glial cells, respectively; this stabilization is further increased in response to metabotropic glutamate receptor (mGluR) stimulation (PubMed:17417632). Undergoes liquid-liquid phase separation following phosphorylation and interaction with CAPRIN1, promoting formation of cytoplasmic ribonucleoprotein granules that concentrate mRNAs with factors that inhibit translation and mediate deadenylation of target mRNAs (By similarity). Acts as a repressor of mRNA translation in synaptic regions by mediating formation of neuronal ribonucleoprotein granules and promoting recruitmtent of EIF4EBP2 (By similarity). Plays a role in selective delivery of a subset of dendritic mRNAs to synaptic sites in response to mGluR activation in a kinesin-dependent manner (PubMed:18539120). Plays a role as a repressor of mRNA translation during the transport of dendritic mRNAs to postsynaptic dendritic spines (PubMed:11376146, PubMed:12581522, PubMed:12927206, PubMed:14570712, PubMed:15475576, PubMed:16908410, PubMed:18805096, PubMed:19640847, PubMed:21784246, PubMed:23235829). Component of the CYFIP1-EIF4E-FMR1 complex which blocks cap-dependent mRNA translation initiation (PubMed:18805096). Represses mRNA translation by stalling ribosomal translocation during elongation (PubMed:21784246). Reports are contradictory with regards to its ability to mediate translation inhibition of (MBP) mRNA in oligodendrocytes (PubMed:14613971, PubMed:23891804). Also involved in the recruitment of the RNA helicase MOV10 to a subset of mRNAs and hence regulates microRNA (miRNA)-mediated translational repression by AGO2 (PubMed:20159450, PubMed:25464849). Facilitates the assembly of miRNAs on specific target mRNAs (By similarity). Also plays a role as an activator of mRNA translation of a subset of dendritic mRNAs at synapses (PubMed:14613971, PubMed:14614133, PubMed:15548614, PubMed:19166269, PubMed:19640847, PubMed:21490210). In response to mGluR stimulation, FMR1-target mRNAs are rapidly derepressed, allowing for local translation at synapses (PubMed:16908410, PubMed:17507556, PubMed:19640847). Binds to a large subset of dendritic mRNAs that encode a myriad of proteins involved in pre- and postsynaptic functions (PubMed:11376146, PubMed:11719188, PubMed:14613971, PubMed:17507556, PubMed:21490210, PubMed:21784246, PubMed:24349419). Binds to 5'-ACU[GU]-3' and/or 5'-[AU]GGA-3' RNA consensus sequences within mRNA targets, mainly at coding sequence (CDS) and 3'-untranslated region (UTR) and less frequently at 5'-UTR (By similarity). Binds to intramolecular G-quadruplex structures in the 5'- or 3'-UTRs of mRNA targets (PubMed:25692235). Binds to G-quadruplex structures in the 3'-UTR of its own mRNA (By similarity). Also binds to RNA ligands harboring a kissing complex (kc) structure; this binding may mediate the association of FMR1 with polyribosomes (By similarity). Binds mRNAs containing U-rich target sequences (By similarity). Binds to a triple stem-loop RNA structure, called Sod1 stem loop interacting with FMRP (SoSLIP), in the 5'-UTR region of superoxide dismutase SOD1 mRNA (PubMed:19166269). Binds to the dendritic, small non-coding brain cytoplasmic RNA 1 (BC1); which may increase the association of the CYFIP1-EIF4E-FMR1 complex to FMR1 target mRNAs at synapses (PubMed:12581522, PubMed:18805096). Plays a role in mRNA nuclear export (PubMed:16790844, PubMed:31340148, PubMed:31753916). Specifically recognizes and binds a subset of N6-methyladenosine (m6A)-containing mRNAs, promoting their nuclear export in a XPO1/CRM1-dependent manner (PubMed:31340148, PubMed:31753916). Together with export factor NXF2, is involved in the regulation of the NXF1 mRNA stability in neurons (PubMed:17548835). Associates with export factor NXF1 mRNA-containing ribonucleoprotein particles (mRNPs) in a NXF2-dependent manner (PubMed:17548835). Binds to a subset of miRNAs in the brain (PubMed:20159450). May associate with nascent transcripts in a nuclear protein NXF1-dependent manner (By similarity). In vitro, binds to RNA homomer; preferentially on poly(G) and to a lesser extent on poly(U), but not on poly(A) or poly(C) (By similarity). Moreover, plays a role in the modulation of the sodium-activated potassium channel KCNT1 gating activity (PubMed:20512134). Negatively regulates the voltage-dependent calcium channel current density in soma and presynaptic terminals of dorsal root ganglion (DRG) neurons, and hence regulates synaptic vesicle exocytosis (By similarity). Modulates the voltage-dependent calcium channel CACNA1B expression at the plasma membrane by targeting the channels for proteasomal degradation (PubMed:24709664). Plays a role in regulation of MAP1B-dependent microtubule dynamics during neuronal development (PubMed:15475576). Has been shown to play a translation-independent role in the modulation of presynaptic action potential (AP) duration and neurotransmitter release via large-conductance calcium-activated potassium (BK) channels in hippocampal and cortical excitatory neurons (PubMed:25561520). May be involved in the control of DNA damage response (DDR) mechanisms through the regulation of ATR-dependent signaling pathways such as histone H2AX/H2A.x and BRCA1 phosphorylations (PubMed:24813610). Forms a cytoplasmic messenger ribonucleoprotein (mRNP) network by packaging long mRNAs, serving as a scaffold that recruits proteins and signaling molecules. This network facilitates signaling reactions by maintaining proximity between kinases and substrates (By similarity).</text>
</comment>
<comment type="subunit">
    <text evidence="1 6 7 8 11 12 14 16 17 20 24 25 26 29 35 39 40 41 43 48 50 54 56 57 63 67">Homodimer (By similarity). Forms heterodimer with FXR1; heterodimerization occurs in a methylation-dependent manner (By similarity). Forms heterodimer with FXR2 (By similarity). Homooligomer (By similarity). Component of the CYFIP1-EIF4E-FMR1 complex at least composed of CYFIP, EIF4E and FMR1; this mRNA cap binding complex formation increases in presence of the brain cytoplasmic RNA BC1 and is dynamically regulated in an activity-dependent manner to repress and then possibly release dendritic mRNAs for translation in response to mGluR stimulation (PubMed:18805096). Associates with the SMN core complex that contains SMN, GEMIN2/SIP1, DDX20/GEMIN3, GEMIN4, GEMIN5, GEMIN6, GEMIN7, GEMIN8 and STRAP/UNRIP (PubMed:18093976). Part of a ribonucleoprotein complex with AGO2/EIF2C2 and miRNAs (By similarity). Interacts with AGO2/EIF2C2 (By similarity). Interacts (via C-terminus) with CACNA1B; this interaction induces a decrease in the number of presynaptic functional CACNA1B channels at the cell surface (PubMed:24709664). Interacts with CYFIP1; this interaction recruits CYFIP1 to capped mRNA (PubMed:11438699, PubMed:18805096). Interacts with CYFIP2 (PubMed:11438699). Interacts with EIF5; this interaction occurs in a RNA-dependent manner (By similarity). Interacts with dynein (PubMed:18539120). Interacts with FXR1 and FXR2 (PubMed:10567518). Interacts with methylated histone H3 (By similarity). Interacts with IGF2BP1; this interaction allows to recruit IGF2BP1 to mRNA in a FMR1-dependent manner (By similarity). Interacts (via N-terminus) with KCNMB4 (PubMed:25561520). Interacts with KCNT1 (via C-terminus); this interaction alters gating properties of KCNT1 (PubMed:20512134). Interacts (via C-terminus) with KIF5A; this interaction is increased in a mGluR-dependent manner (PubMed:18539120). Interacts (via phosphorylated form) with MCRS1 (via N-terminus) (By similarity). Interacts with MOV10; this interaction is direct, occurs in an RNA-dependent manner on polysomes and induces association of MOV10 with RNAs (PubMed:25464849). Interacts with MYO5A and PURA; these interactions occur in association with polyribosome (PubMed:12147688). Interacts with NCL (PubMed:10567518). Interacts with NUFIP1 (PubMed:10556305). Interacts (via N-terminus) with NUFIP2 (By similarity). Interacts with NXF1; this interaction occurs in a mRNA-dependent and polyribosome-independent manner in the nucleus (By similarity). Interacts with NXF2 (via N-terminus); this interaction is direct and occurs in a NXF1 mRNA-containing mRNP complexes (PubMed:16790844, PubMed:17548835). Interacts with RANBP9; this interaction is direct and inhibits binding of FMR1 to RNA homomer (PubMed:15381419). Interacts with RPLP0 (PubMed:21784246). Interacts (via C-terminus) with SMN (via C-terminus); this interaction is direct and occurs in a RNA-independent manner (By similarity). Interacts with TDRD3 (via C-terminus); this interaction is direct (By similarity). Interacts with YBX1; this interaction occurs in association with polyribosome (PubMed:11162447). Interacts with nucleosome (By similarity). Associates with polyribosome; this association occurs in a mRNA-dependent manner (PubMed:12575950, PubMed:12581522, PubMed:14613971, PubMed:15317853, PubMed:15805463, PubMed:21784246, PubMed:8842725, PubMed:9285783). Associates with messenger ribonucleoprotein particles (mRNPs) (PubMed:11719188, PubMed:12575950, PubMed:12581522, PubMed:15329415, PubMed:18805096, PubMed:8842725, PubMed:9285783). Associates with microtubules in a kinesin- and dynein-dependent manner (PubMed:18539120). Interacts with HABP4 (By similarity). Interacts with SND1 (By similarity). Interacts (when phosphorylated by CK2) with CAPRIN1; interaction with CAPRIN1 promotes formation of a membraneless compartment (By similarity).</text>
</comment>
<comment type="interaction">
    <interactant intactId="EBI-645094">
        <id>P35922</id>
    </interactant>
    <interactant intactId="EBI-644061">
        <id>Q9JHG6</id>
        <label>Rcan1</label>
    </interactant>
    <organismsDiffer>false</organismsDiffer>
    <experiments>3</experiments>
</comment>
<comment type="subcellular location">
    <subcellularLocation>
        <location evidence="22 23 25 31 41 63 67">Cytoplasm</location>
        <location evidence="22 23 25 31 41 63 67">Cytoplasmic ribonucleoprotein granule</location>
    </subcellularLocation>
    <subcellularLocation>
        <location evidence="1">Cytoplasm</location>
        <location evidence="1">Stress granule</location>
    </subcellularLocation>
    <subcellularLocation>
        <location evidence="36 61 63 64">Nucleus</location>
    </subcellularLocation>
    <subcellularLocation>
        <location evidence="1">Nucleus</location>
        <location evidence="1">Nucleolus</location>
    </subcellularLocation>
    <subcellularLocation>
        <location evidence="55">Chromosome</location>
        <location evidence="55">Centromere</location>
    </subcellularLocation>
    <subcellularLocation>
        <location evidence="55">Chromosome</location>
    </subcellularLocation>
    <subcellularLocation>
        <location evidence="11 19 24 35 54 64">Cytoplasm</location>
    </subcellularLocation>
    <subcellularLocation>
        <location evidence="11 35 63 67">Cytoplasm</location>
        <location evidence="11 35 63 67">Perinuclear region</location>
    </subcellularLocation>
    <subcellularLocation>
        <location evidence="20 36 43 45">Perikaryon</location>
    </subcellularLocation>
    <subcellularLocation>
        <location evidence="1">Cell projection</location>
        <location evidence="1">Neuron projection</location>
    </subcellularLocation>
    <subcellularLocation>
        <location evidence="33 45">Cell projection</location>
        <location evidence="33 45">Axon</location>
    </subcellularLocation>
    <subcellularLocation>
        <location evidence="22 33 36 41 43 45">Cell projection</location>
        <location evidence="22 33 36 41 43 45">Dendrite</location>
    </subcellularLocation>
    <subcellularLocation>
        <location evidence="22 33">Cell projection</location>
        <location evidence="22 33">Dendritic spine</location>
    </subcellularLocation>
    <subcellularLocation>
        <location evidence="43">Synapse</location>
        <location evidence="43">Synaptosome</location>
    </subcellularLocation>
    <subcellularLocation>
        <location evidence="33">Cell projection</location>
        <location evidence="33">Filopodium</location>
    </subcellularLocation>
    <subcellularLocation>
        <location evidence="33">Cell projection</location>
        <location evidence="33">Growth cone</location>
    </subcellularLocation>
    <subcellularLocation>
        <location evidence="33">Cell projection</location>
        <location evidence="33">Filopodium tip</location>
    </subcellularLocation>
    <subcellularLocation>
        <location evidence="33">Synapse</location>
    </subcellularLocation>
    <subcellularLocation>
        <location evidence="45 59">Postsynaptic cell membrane</location>
    </subcellularLocation>
    <subcellularLocation>
        <location evidence="45 59">Presynaptic cell membrane</location>
    </subcellularLocation>
    <subcellularLocation>
        <location evidence="54">Cell membrane</location>
    </subcellularLocation>
    <text evidence="1 2 11 22 23 31 33 35 41 43 45 54 55 63 64">Mediates formation and localizes to cytoplasmic ribonucleoprotein membraneless compartments (By similarity). Localizes to cytoplasmic granules, also referred to as messenger ribonucleoprotein particles or mRNPs, along dendrites and dendritic spines (PubMed:15028757, PubMed:16631377). FMR1-containing cytoplasmic granules colocalize to F-actin-rich structures, including filopodium, spines and growth cone during the development of hippocampal neurons (By similarity). FMR1-containing cytoplasmic granules are transported out of the soma along axon and dendrite to synaptic contacts in a microtubule- and kinesin-dependent manner (PubMed:15312650, PubMed:16098134, PubMed:18539120). Colocalizes with FXR1 and FXR2 in discrete granules, called fragile X granules (FXGs), along axon and presynaptic compartments (PubMed:19193898). Colocalizes with TDRD3 in cytoplasmic stress granules (SGs) in response to various cellular stress (By similarity). Colocalizes with H2AX/H2A.x in pericentromeric heterochromatin in response to DNA damaging agents (PubMed:24813610). Localizes on meiotic pachytene-stage chromosomes (PubMed:24813610). Forms nuclear foci representing sites of ongoing DNA replication in response to DNA damaging agents (PubMed:24813610). Shuttles between nucleus and cytoplasm in a XPO1/CRM1-dependent manner (PubMed:8842725, PubMed:8895584). Colocalizes with CACNA1B in the cytoplasm and at the cell membrane of neurons (PubMed:24709664). Colocalizes with CYFIP1, CYFIP2, NXF2 and ribosomes in the perinuclear region (PubMed:11438699, PubMed:16790844). Colocalizes with CYFIP1 and EIF4E in dendrites and probably at synapses (PubMed:18805096). Colocalizes with FXR1, kinesin, 60S acidic ribosomal protein RPLP0 and SMN in cytoplasmic granules in the soma and neurite cell processes (By similarity).</text>
</comment>
<comment type="subcellular location">
    <molecule>Isoform 4</molecule>
    <subcellularLocation>
        <location evidence="63">Nucleus</location>
    </subcellularLocation>
    <subcellularLocation>
        <location evidence="63">Nucleus</location>
        <location evidence="63">Nucleoplasm</location>
    </subcellularLocation>
</comment>
<comment type="alternative products">
    <event type="alternative splicing"/>
    <isoform>
        <id>P35922-1</id>
        <name>1</name>
        <name>ISO1</name>
        <sequence type="displayed"/>
    </isoform>
    <isoform>
        <id>P35922-2</id>
        <name>2</name>
        <name>ISO2</name>
        <sequence type="described" ref="VSP_002828"/>
    </isoform>
    <isoform>
        <id>P35922-3</id>
        <name>3</name>
        <name>ISO3</name>
        <sequence type="described" ref="VSP_002829"/>
    </isoform>
    <isoform>
        <id>P35922-4</id>
        <name>4</name>
        <name>ISO4</name>
        <sequence type="described" ref="VSP_002831 VSP_002830"/>
    </isoform>
    <isoform>
        <id>P35922-5</id>
        <name>5</name>
        <name>ISO5</name>
        <sequence type="described" ref="VSP_002832 VSP_002833"/>
    </isoform>
    <isoform>
        <id>P35922-6</id>
        <name>6</name>
        <name>ISO6</name>
        <sequence type="described" ref="VSP_002834 VSP_002835"/>
    </isoform>
    <isoform>
        <id>P35922-7</id>
        <name>7</name>
        <name>ISO7</name>
        <sequence type="described" ref="VSP_002827"/>
    </isoform>
    <isoform>
        <id>P35922-8</id>
        <name>8</name>
        <name>ISO8</name>
        <sequence type="described" ref="VSP_002827 VSP_002828"/>
    </isoform>
    <isoform>
        <id>P35922-9</id>
        <name>9</name>
        <name>ISO9</name>
        <sequence type="described" ref="VSP_002827 VSP_002829"/>
    </isoform>
    <isoform>
        <id>P35922-10</id>
        <name>10</name>
        <name>ISO10</name>
        <sequence type="described" ref="VSP_002827 VSP_002831 VSP_002830"/>
    </isoform>
    <isoform>
        <id>P35922-11</id>
        <name>11</name>
        <name>ISO11</name>
        <sequence type="described" ref="VSP_002827 VSP_002832 VSP_002833"/>
    </isoform>
    <isoform>
        <id>P35922-12</id>
        <name>12</name>
        <name>ISO12</name>
        <sequence type="described" ref="VSP_002827 VSP_002834 VSP_002835"/>
    </isoform>
</comment>
<comment type="tissue specificity">
    <text evidence="20 27 30 35 39 45 52 62 66">Expressed in brain (PubMed:8033209, PubMed:9259278). Strongly expressed in the neonatal hippocampus (PubMed:15475576). Expressed in the brainstem (PubMed:14613971). Expressed in the cerebellum (PubMed:19193898). Expressed in neurons of hippocampal area CA3 (PubMed:17548835, PubMed:19193898). Expressed in neurons of the olfactory bulb including the granule, mitral, tufted and juxtaglomerular cells (PubMed:19193898). Expressed in both mature and immature olfactory sensory neurons (OSNs) (PubMed:19193898). Expressed in neurons in all layers and in all regions of cerebral cortex (PubMed:19193898). Expressed in mature oligodendrocytes (OLGs) (PubMed:23891804). Expressed in spermatogonia (at protein level) (PubMed:16790844). Expressed predominantly in the brain (PubMed:16000371). Expressed in testis (PubMed:8033209).</text>
</comment>
<comment type="induction">
    <text evidence="21 36">Rapidly and transiently up-regulated in response to metabotropic glutamate receptor activation in a protein synthesis-dependent manner in neurons (at protein level).</text>
</comment>
<comment type="domain">
    <text evidence="1">The N-terminal 134 amino acids are necessary for homodimerization and RNA-binding. The N-terminal 298 amino acids are sufficient to interact with KCNMB4 and to regulate presynaptic action potential (AP) duration in neurons. The two agenet-like domains are necessary for binding to histone H3 in a methylation-dependent manner. The KH domains are necessary for mediating miRNA annealing to specific RNA targets. The KH 2 domain is necessary for binding to kissing complex (kc) RNA ligands. The RGG box domain is necessary for binding to mRNA targets that contain G-quadruplex structures. The RGG-box domain is necessary for binding to a triple stem-loop RNA structure, called Sod1 stem loop interacting with FMRP (SoSLIP), in the superoxide dismutase SOD1 mRNA. The RGG box domain is necessary for binding to its own mRNA. The RGG-box domain is necessary for binding to homomer poly(G).</text>
</comment>
<comment type="domain">
    <text evidence="1">The C-terminal disordered region undergoes liquid-liquid phase separation (LLPS) for the formation of a membraneless compartment that concentrates mRNAs with associated regulatory factors.</text>
</comment>
<comment type="PTM">
    <text evidence="1 19 60">Phosphorylated on several serine residues (PubMed:14570712, PubMed:27957526). Phosphorylation by casein kinase II (CK2) promotes interaction with CAPRIN1 and liquid-liquid phase separation (LLPS) for the formation of a membraneless compartment that concentrates mRNAs with associated regulatory factors (By similarity). Phosphorylation at Ser-499 by CK2 promotes secondary phosphorylation of other nearby serine residues (PubMed:14570712, PubMed:27957526). Phosphorylation has no effect on the binding of individual mRNA species (PubMed:14570712). Unphosphorylated FMR1 is associated with actively translating polyribosome, whereas a fraction of phosphorylated FMR1 is associated with apparently stalled polyribosome (PubMed:14570712). Dephosphorylation by an activated phosphatase may release the FMR1-mediated translational repression and allow synthesis of a locally required protein at synapses (PubMed:14570712).</text>
</comment>
<comment type="PTM">
    <text evidence="36">Monoubiquitinated (PubMed:16908410). Polyubiquitinated (PubMed:16908410). Ubiquitinated and targeted for proteasomal degradation after activation of metabotropic glutamate receptor (mGluR) (PubMed:16908410).</text>
</comment>
<comment type="PTM">
    <text evidence="1 32">Monomethylated and asymmetrically dimethylated by PRMT1, PRMT3 and PRMT4 at four arginine residues of the arginine-glycine-glycine box (PubMed:16319129). Methylation decreases ability to undergo liquid-liquid phase separation (LLPS) for the formation of a membraneless compartment (By similarity). Methylation does not affect mRNA-binding (By similarity). Methylation is necessary for heterodimerization with FXR1, association with polyribosomes, recruitment into stress granules and translation of FMR1 target mRNAs (By similarity).</text>
</comment>
<comment type="disruption phenotype">
    <text evidence="10 13 16 17 18 21 27 28 33 34 36 37 38 41 42 44 46 49 50 51 52 53 54 55 57 59 61 62 65">Show normal fertility (PubMed:8033209). Display enlarged testes and ovaries (PubMed:23235829, PubMed:8033209). Display learning deficits and hyperactivity, in the absence of gross pathological abnormalities of the brain (PubMed:8033209). Display immature neurons with excess of long, thin growth cone filopodia and dendritic filopodia and spine protrusions with less synaptic contacts (PubMed:11438589, PubMed:16631377, PubMed:17417632, PubMed:18539120, PubMed:9144249). Show no increase in the number of dendritic filopodia-spine protrusions in response to KCL-mediated depolarization (PubMed:16631377). Display alterations in the appearance, distribution and volume of nuclear speckles (PubMed:24349419). Display enhanced metabotropic glutamate receptor-dependent long-term depression (mGluR-LTD) in the hippocampus (PubMed:11438589, PubMed:12032354, PubMed:16908410). Leads to excessive presynaptic action potential (AP) broadening in hippocampal and cortical neurons (PubMed:25561520). Show alteration in the splicing pattern of its own FMR1 mRNA in the cortex (PubMed:18653529). Alters the abundance and subcellular distribution of a subset of mRNAs in the brain (PubMed:12575950, PubMed:17417632). Display a reduction in the recruitment of certain FMR1 target mRNAs in actively translating polyribosomes at synapses (PubMed:12575950, PubMed:17507556). Display decreased delivery of specific mRNAs into dendrites in mGluR-stimulated neurons (PubMed:18539120). Display a delayed MAPB1 protein expression decline in the developing hippocampus (PubMed:15475576). Show a relief of ribosome stalling on dendritic FMR1 target mRNAs (PubMed:21784246). Display enhanced postsynaptic protein synthesis of a subset of FMR1 target mRNAs (PubMed:12581522, PubMed:16908410, PubMed:19640847, PubMed:21784246). Unable to induce postsynaptic protein synthesis of a subset of FMR1 mRNA targets in response to mGluR activation (PubMed:16908410, PubMed:17507556). Display enhanced presynaptic protein synthesis of the voltage-dependent calcium channel CACNA1B (PubMed:24709664). Display also enhanced protein synthesis of a subset of FMR1 target mRNAs in ovaries (PubMed:23235829). Display reduced postsynaptic protein synthesis of a subset of FMR1 target mRNAs (PubMed:12927206, PubMed:14614133, PubMed:19166269, PubMed:19640847, PubMed:21490210). Display reduced general protein synthesis in synapses in response to mGluR activation (PubMed:15548614). Impaired localization of Fxr2 to post-synapses (PubMed:27770568). Show brain-region specific reduction in the expression and/or localization of FAM206A/Simiate (PubMed:24349419). Display similar myelin basic protein (MBP) nexpression level in brain cerebrum than in wild-type mice (PubMed:23891804). Display an absence of nuclear foci on meiotic pachytene-stage chromosomes (PubMed:24813610). Show incomplete resolution of single-strand repair intermediates, crossing over and pairing of homologous chromosomes during meiotic prophase in a subset of spermatocytes (PubMed:24813610). Mice lacking both Fxr2 and Fmr1 display exaggerated learning deficits, characterized by prepulse inhibition of acoustic startle response and contextual fear conditioning compared with single mutant (Fxr2 or Fmr1) mice (PubMed:16675531). Impaired nuclear export of N6-methyladenosine (m6A)-containing mRNAs, resulting in the nuclear accumulation of neural differentiation-related mRNAs, which causes delayed neural progenitor differentiation (PubMed:31340148).</text>
</comment>
<comment type="similarity">
    <text evidence="71">Belongs to the FMR1 family.</text>
</comment>
<keyword id="KW-0007">Acetylation</keyword>
<keyword id="KW-0010">Activator</keyword>
<keyword id="KW-0025">Alternative splicing</keyword>
<keyword id="KW-1003">Cell membrane</keyword>
<keyword id="KW-0966">Cell projection</keyword>
<keyword id="KW-0137">Centromere</keyword>
<keyword id="KW-0158">Chromosome</keyword>
<keyword id="KW-0963">Cytoplasm</keyword>
<keyword id="KW-0227">DNA damage</keyword>
<keyword id="KW-0472">Membrane</keyword>
<keyword id="KW-0488">Methylation</keyword>
<keyword id="KW-0507">mRNA processing</keyword>
<keyword id="KW-0508">mRNA splicing</keyword>
<keyword id="KW-0509">mRNA transport</keyword>
<keyword id="KW-0524">Neurogenesis</keyword>
<keyword id="KW-0539">Nucleus</keyword>
<keyword id="KW-0597">Phosphoprotein</keyword>
<keyword id="KW-0628">Postsynaptic cell membrane</keyword>
<keyword id="KW-1185">Reference proteome</keyword>
<keyword id="KW-0677">Repeat</keyword>
<keyword id="KW-0678">Repressor</keyword>
<keyword id="KW-0687">Ribonucleoprotein</keyword>
<keyword id="KW-0694">RNA-binding</keyword>
<keyword id="KW-0943">RNA-mediated gene silencing</keyword>
<keyword id="KW-0770">Synapse</keyword>
<keyword id="KW-0771">Synaptosome</keyword>
<keyword id="KW-0810">Translation regulation</keyword>
<keyword id="KW-0813">Transport</keyword>
<keyword id="KW-0832">Ubl conjugation</keyword>